<proteinExistence type="evidence at protein level"/>
<reference key="1">
    <citation type="journal article" date="1984" name="Nucleic Acids Res.">
        <title>The complete nucleotide sequence of a common cold virus: human rhinovirus 14.</title>
        <authorList>
            <person name="Stanway G."/>
            <person name="Hughes P.J."/>
            <person name="Mountford R.C."/>
            <person name="Minor P.D."/>
            <person name="Almond J.W."/>
        </authorList>
    </citation>
    <scope>NUCLEOTIDE SEQUENCE [GENOMIC RNA]</scope>
</reference>
<reference key="2">
    <citation type="journal article" date="1993" name="J. Virol.">
        <title>Role of maturation cleavage in infectivity of picornaviruses: activation of an infectosome.</title>
        <authorList>
            <person name="Lee W.M."/>
            <person name="Monroe S."/>
            <person name="Rueckert R.R."/>
        </authorList>
    </citation>
    <scope>NUCLEOTIDE SEQUENCE [GENOMIC RNA]</scope>
    <scope>PROTEOLYTIC CLEAVAGE (CAPSID PROTEIN VP0)</scope>
</reference>
<reference key="3">
    <citation type="journal article" date="1985" name="Proc. Natl. Acad. Sci. U.S.A.">
        <title>Molecular cloning and complete sequence determination of RNA genome of human rhinovirus type 14.</title>
        <authorList>
            <person name="Callahan P.L."/>
            <person name="Mizutani S."/>
            <person name="Colonno R.J."/>
        </authorList>
    </citation>
    <scope>NUCLEOTIDE SEQUENCE [GENOMIC RNA]</scope>
</reference>
<reference key="4">
    <citation type="journal article" date="2006" name="J. Virol.">
        <title>Effects of picornavirus 3A Proteins on Protein Transport and GBF1-dependent COP-I recruitment.</title>
        <authorList>
            <person name="Wessels E."/>
            <person name="Duijsings D."/>
            <person name="Lanke K.H."/>
            <person name="van Dooren S.H."/>
            <person name="Jackson C.L."/>
            <person name="Melchers W.J."/>
            <person name="van Kuppeveld F.J."/>
        </authorList>
    </citation>
    <scope>FUNCTION (PROTEIN 3A)</scope>
    <scope>INTERACTION WITH HOST GBF1 (PROTEIN 3A)</scope>
</reference>
<reference key="5">
    <citation type="journal article" date="2008" name="Virology">
        <title>Cleavage of eukaryotic initiation factor eIF5B by enterovirus 3C proteases.</title>
        <authorList>
            <person name="de Breyne S."/>
            <person name="Bonderoff J.M."/>
            <person name="Chumakov K.M."/>
            <person name="Lloyd R.E."/>
            <person name="Hellen C.U."/>
        </authorList>
    </citation>
    <scope>FUNCTION (PROTEASE 3C)</scope>
</reference>
<reference key="6">
    <citation type="journal article" date="2010" name="Rev. Med. Virol.">
        <title>Uncoating of human rhinoviruses.</title>
        <authorList>
            <person name="Fuchs R."/>
            <person name="Blaas D."/>
        </authorList>
    </citation>
    <scope>REVIEW</scope>
</reference>
<reference key="7">
    <citation type="journal article" date="2012" name="Adv. Virol.">
        <title>Productive entry pathways of human rhinoviruses.</title>
        <authorList>
            <person name="Fuchs R."/>
            <person name="Blaas D."/>
        </authorList>
    </citation>
    <scope>REVIEW</scope>
</reference>
<reference key="8">
    <citation type="journal article" date="2019" name="MBio">
        <title>ACBD3 is an essential pan-enterovirus host factor that mediates the interaction between viral 3A protein and cellular protein PI4KB.</title>
        <authorList>
            <person name="Lyoo H."/>
            <person name="van der Schaar H.M."/>
            <person name="Dorobantu C.M."/>
            <person name="Rabouw H.H."/>
            <person name="Strating J.R.P.M."/>
            <person name="van Kuppeveld F.J.M."/>
        </authorList>
    </citation>
    <scope>FUNCTION (PROTEIN 3A)</scope>
</reference>
<reference key="9">
    <citation type="journal article" date="2020" name="Science">
        <title>Enteroviral 3C protease activates the human NLRP1 inflammasome in airway epithelia.</title>
        <authorList>
            <person name="Robinson K.S."/>
            <person name="Teo D.E.T."/>
            <person name="Tan K.S."/>
            <person name="Toh G.A."/>
            <person name="Ong H.H."/>
            <person name="Lim C.K."/>
            <person name="Lay K."/>
            <person name="Au B.V."/>
            <person name="Lew T.S."/>
            <person name="Chu J.J.H."/>
            <person name="Chow V.T.K."/>
            <person name="Wang Y."/>
            <person name="Zhong F.L."/>
            <person name="Reversade B."/>
        </authorList>
    </citation>
    <scope>FUNCTION (PROTEASE 3C)</scope>
    <scope>MUTAGENESIS OF CYS-1683</scope>
</reference>
<reference key="10">
    <citation type="journal article" date="2021" name="Elife">
        <title>Diverse viral proteases activate the NLRP1 inflammasome.</title>
        <authorList>
            <person name="Tsu B.V."/>
            <person name="Beierschmitt C."/>
            <person name="Ryan A.P."/>
            <person name="Agarwal R."/>
            <person name="Mitchell P.S."/>
            <person name="Daugherty M.D."/>
        </authorList>
    </citation>
    <scope>FUNCTION (PROTEASE 3C)</scope>
</reference>
<reference key="11">
    <citation type="journal article" date="1985" name="Nature">
        <title>Structure of a human common cold virus and functional relationship to other picornaviruses.</title>
        <authorList>
            <person name="Rossman M.G."/>
            <person name="Arnold E."/>
            <person name="Erickson J.W."/>
            <person name="Frankenberger E.A."/>
            <person name="Griffith J.P."/>
            <person name="Hecht H.-J."/>
            <person name="Johnson J.E."/>
            <person name="Kamer G."/>
            <person name="Luo M."/>
            <person name="Mosser A.G."/>
            <person name="Rueckert R.R."/>
            <person name="Sherry B."/>
            <person name="Vriend G."/>
        </authorList>
    </citation>
    <scope>X-RAY CRYSTALLOGRAPHY (3.0 ANGSTROMS)</scope>
</reference>
<reference key="12">
    <citation type="journal article" date="1988" name="Acta Crystallogr. A">
        <title>The use of molecular-replacement phases for the refinement of the human rhinovirus 14 structure.</title>
        <authorList>
            <person name="Arnold E."/>
            <person name="Rossman M.G."/>
        </authorList>
    </citation>
    <scope>X-RAY CRYSTALLOGRAPHY (3.0 ANGSTROMS)</scope>
</reference>
<reference key="13">
    <citation type="journal article" date="1990" name="J. Mol. Biol.">
        <title>Analysis of the structure of a common cold virus, human rhinovirus 14, refined at a resolution of 3.0 A.</title>
        <authorList>
            <person name="Arnold E."/>
            <person name="Rossman M.G."/>
        </authorList>
    </citation>
    <scope>X-RAY CRYSTALLOGRAPHY (3.0 ANGSTROMS)</scope>
</reference>
<reference key="14">
    <citation type="journal article" date="1999" name="EMBO J.">
        <title>Structural studies of two rhinovirus serotypes complexed with fragments of their cellular receptor.</title>
        <authorList>
            <person name="Kolatkar P.R."/>
            <person name="Bella J."/>
            <person name="Olson N.H."/>
            <person name="Bator C.M."/>
            <person name="Baker T.S."/>
            <person name="Rossmann M.G."/>
        </authorList>
    </citation>
    <scope>STRUCTURE BY ELECTRON MICROSCOPY (6.0 ANGSTROMS) OF 70-856 IN COMPLEX WITH ICAM1</scope>
    <scope>FUNCTION (CAPSID PROTEIN VP1)</scope>
    <scope>INTERACTION WITH HOST ICAM1 (CAPSID PROTEIN VP1)</scope>
</reference>
<reference key="15">
    <citation type="journal article" date="2002" name="J. Virol.">
        <title>Inhibition of nuclear import and alteration of nuclear pore complex composition by rhinovirus.</title>
        <authorList>
            <person name="Gustin K.E."/>
            <person name="Sarnow P."/>
        </authorList>
    </citation>
    <scope>FUNCTION (PROTEASE 2A)</scope>
</reference>
<reference evidence="26 27 28 29" key="16">
    <citation type="journal article" date="2017" name="Proc. Natl. Acad. Sci. U.S.A.">
        <title>Antibody-induced uncoating of human rhinovirus B14.</title>
        <authorList>
            <person name="Dong Y."/>
            <person name="Liu Y."/>
            <person name="Jiang W."/>
            <person name="Smith T.J."/>
            <person name="Xu Z."/>
            <person name="Rossmann M.G."/>
        </authorList>
    </citation>
    <scope>STRUCTURE BY ELECTRON MICROSCOPY (2.26 ANGSTROMS) OF 2-856</scope>
    <scope>FUNCTION (CAPSID PROTEIN VP1)</scope>
</reference>
<reference evidence="30" key="17">
    <citation type="journal article" date="2019" name="PLoS Pathog.">
        <title>Convergent evolution in the mechanisms of ACBD3 recruitment to picornavirus replication sites.</title>
        <authorList>
            <person name="Horova V."/>
            <person name="Lyoo H."/>
            <person name="Rozycki B."/>
            <person name="Chalupska D."/>
            <person name="Smola M."/>
            <person name="Humpolickova J."/>
            <person name="Strating J.R.P.M."/>
            <person name="van Kuppeveld F.J.M."/>
            <person name="Boura E."/>
            <person name="Klima M."/>
        </authorList>
    </citation>
    <scope>X-RAY CRYSTALLOGRAPHY (2.81 ANGSTROMS) OF 1430-1485</scope>
    <scope>INTERACTION WITH HOST ACBD3 (PROTEIN 3A)</scope>
    <scope>FUNCTION (PROTEIN 3A)</scope>
</reference>
<keyword id="KW-0002">3D-structure</keyword>
<keyword id="KW-1072">Activation of host autophagy by virus</keyword>
<keyword id="KW-0067">ATP-binding</keyword>
<keyword id="KW-0068">Autocatalytic cleavage</keyword>
<keyword id="KW-0167">Capsid protein</keyword>
<keyword id="KW-0191">Covalent protein-RNA linkage</keyword>
<keyword id="KW-0235">DNA replication</keyword>
<keyword id="KW-1262">Eukaryotic host gene expression shutoff by virus</keyword>
<keyword id="KW-1193">Eukaryotic host translation shutoff by virus</keyword>
<keyword id="KW-0347">Helicase</keyword>
<keyword id="KW-1035">Host cytoplasm</keyword>
<keyword id="KW-1036">Host cytoplasmic vesicle</keyword>
<keyword id="KW-1190">Host gene expression shutoff by virus</keyword>
<keyword id="KW-1043">Host membrane</keyword>
<keyword id="KW-1192">Host mRNA suppression by virus</keyword>
<keyword id="KW-1048">Host nucleus</keyword>
<keyword id="KW-0945">Host-virus interaction</keyword>
<keyword id="KW-0378">Hydrolase</keyword>
<keyword id="KW-1090">Inhibition of host innate immune response by virus</keyword>
<keyword id="KW-1099">Inhibition of host mRNA nuclear export by virus</keyword>
<keyword id="KW-1088">Inhibition of host RIG-I by virus</keyword>
<keyword id="KW-1113">Inhibition of host RLR pathway by virus</keyword>
<keyword id="KW-0407">Ion channel</keyword>
<keyword id="KW-0406">Ion transport</keyword>
<keyword id="KW-0449">Lipoprotein</keyword>
<keyword id="KW-0460">Magnesium</keyword>
<keyword id="KW-0472">Membrane</keyword>
<keyword id="KW-0479">Metal-binding</keyword>
<keyword id="KW-0519">Myristate</keyword>
<keyword id="KW-0547">Nucleotide-binding</keyword>
<keyword id="KW-0548">Nucleotidyltransferase</keyword>
<keyword id="KW-0597">Phosphoprotein</keyword>
<keyword id="KW-1172">Pore-mediated penetration of viral genome into host cell</keyword>
<keyword id="KW-0645">Protease</keyword>
<keyword id="KW-0677">Repeat</keyword>
<keyword id="KW-0694">RNA-binding</keyword>
<keyword id="KW-0696">RNA-directed RNA polymerase</keyword>
<keyword id="KW-1143">T=pseudo3 icosahedral capsid protein</keyword>
<keyword id="KW-0788">Thiol protease</keyword>
<keyword id="KW-0808">Transferase</keyword>
<keyword id="KW-0813">Transport</keyword>
<keyword id="KW-1161">Viral attachment to host cell</keyword>
<keyword id="KW-0899">Viral immunoevasion</keyword>
<keyword id="KW-1182">Viral ion channel</keyword>
<keyword id="KW-1162">Viral penetration into host cytoplasm</keyword>
<keyword id="KW-1174">Viral penetration via lysis of host organellar membrane</keyword>
<keyword id="KW-0693">Viral RNA replication</keyword>
<keyword id="KW-0946">Virion</keyword>
<keyword id="KW-1164">Virus endocytosis by host</keyword>
<keyword id="KW-1160">Virus entry into host cell</keyword>
<keyword id="KW-0862">Zinc</keyword>
<keyword id="KW-0863">Zinc-finger</keyword>
<accession>P03303</accession>
<accession>Q82083</accession>
<accession>Q82123</accession>
<accession>Q84736</accession>
<accession>Q84737</accession>
<accession>Q84738</accession>
<accession>Q84739</accession>
<accession>Q84740</accession>
<accession>Q84741</accession>
<accession>Q84774</accession>
<accession>Q84775</accession>
<accession>Q84776</accession>
<accession>Q84777</accession>
<accession>Q84778</accession>
<accession>Q84779</accession>
<accession>Q89441</accession>
<accession>Q89649</accession>
<accession>Q89763</accession>
<accession>Q89883</accession>
<organismHost>
    <name type="scientific">Homo sapiens</name>
    <name type="common">Human</name>
    <dbReference type="NCBI Taxonomy" id="9606"/>
</organismHost>
<feature type="initiator methionine" description="Removed; by host" evidence="1">
    <location>
        <position position="1"/>
    </location>
</feature>
<feature type="chain" id="PRO_0000426536" description="Genome polyprotein">
    <location>
        <begin position="2"/>
        <end position="2179"/>
    </location>
</feature>
<feature type="chain" id="PRO_0000426537" description="P1">
    <location>
        <begin position="2"/>
        <end position="856"/>
    </location>
</feature>
<feature type="chain" id="PRO_0000426538" description="Capsid protein VP0">
    <location>
        <begin position="2"/>
        <end position="331"/>
    </location>
</feature>
<feature type="chain" id="PRO_0000426539" description="Capsid protein VP4">
    <location>
        <begin position="2"/>
        <end position="69"/>
    </location>
</feature>
<feature type="chain" id="PRO_0000426540" description="Capsid protein VP2">
    <location>
        <begin position="70"/>
        <end position="331"/>
    </location>
</feature>
<feature type="chain" id="PRO_0000426541" description="Capsid protein VP3">
    <location>
        <begin position="332"/>
        <end position="561"/>
    </location>
</feature>
<feature type="chain" id="PRO_0000426542" description="Capsid protein VP1">
    <location>
        <begin position="562"/>
        <end position="856"/>
    </location>
</feature>
<feature type="chain" id="PRO_0000426543" description="P2">
    <location>
        <begin position="857"/>
        <end position="1429"/>
    </location>
</feature>
<feature type="chain" id="PRO_0000040029" description="Protease 2A">
    <location>
        <begin position="857"/>
        <end position="1002"/>
    </location>
</feature>
<feature type="chain" id="PRO_0000040030" description="Protein 2B">
    <location>
        <begin position="1003"/>
        <end position="1099"/>
    </location>
</feature>
<feature type="chain" id="PRO_0000426544" description="Protein 2C">
    <location>
        <begin position="1100"/>
        <end position="1429"/>
    </location>
</feature>
<feature type="chain" id="PRO_0000426545" description="P3">
    <location>
        <begin position="1430"/>
        <end position="2179"/>
    </location>
</feature>
<feature type="chain" id="PRO_0000426546" description="Protein 3AB">
    <location>
        <begin position="1430"/>
        <end position="1537"/>
    </location>
</feature>
<feature type="chain" id="PRO_0000040032" description="Protein 3A">
    <location>
        <begin position="1430"/>
        <end position="1514"/>
    </location>
</feature>
<feature type="chain" id="PRO_0000426547" description="Viral protein genome-linked">
    <location>
        <begin position="1515"/>
        <end position="1537"/>
    </location>
</feature>
<feature type="chain" id="PRO_0000426548" description="Protein 3CD">
    <location>
        <begin position="1538"/>
        <end position="2179"/>
    </location>
</feature>
<feature type="chain" id="PRO_0000426549" description="Protease 3C">
    <location>
        <begin position="1538"/>
        <end position="1719"/>
    </location>
</feature>
<feature type="chain" id="PRO_0000426550" description="RNA-directed RNA polymerase">
    <location>
        <begin position="1720"/>
        <end position="2179"/>
    </location>
</feature>
<feature type="topological domain" description="Cytoplasmic" evidence="7">
    <location>
        <begin position="2"/>
        <end position="1491"/>
    </location>
</feature>
<feature type="intramembrane region" evidence="7">
    <location>
        <begin position="1492"/>
        <end position="1507"/>
    </location>
</feature>
<feature type="topological domain" description="Cytoplasmic" evidence="7">
    <location>
        <begin position="1508"/>
        <end position="2179"/>
    </location>
</feature>
<feature type="domain" description="SF3 helicase" evidence="9">
    <location>
        <begin position="1205"/>
        <end position="1361"/>
    </location>
</feature>
<feature type="domain" description="Peptidase C3" evidence="10">
    <location>
        <begin position="1538"/>
        <end position="1715"/>
    </location>
</feature>
<feature type="domain" description="RdRp catalytic" evidence="8">
    <location>
        <begin position="1946"/>
        <end position="2060"/>
    </location>
</feature>
<feature type="zinc finger region" description="C4-type" evidence="1">
    <location>
        <begin position="1369"/>
        <end position="1386"/>
    </location>
</feature>
<feature type="region of interest" description="Disordered" evidence="11">
    <location>
        <begin position="1"/>
        <end position="20"/>
    </location>
</feature>
<feature type="region of interest" description="Amphipathic alpha-helix" evidence="7">
    <location>
        <begin position="564"/>
        <end position="584"/>
    </location>
</feature>
<feature type="region of interest" description="Oligomerization" evidence="1">
    <location>
        <begin position="1101"/>
        <end position="1239"/>
    </location>
</feature>
<feature type="region of interest" description="Membrane-binding" evidence="1">
    <location>
        <begin position="1101"/>
        <end position="1173"/>
    </location>
</feature>
<feature type="region of interest" description="RNA-binding" evidence="1">
    <location>
        <begin position="1122"/>
        <end position="1126"/>
    </location>
</feature>
<feature type="region of interest" description="RNA-binding" evidence="1">
    <location>
        <begin position="1413"/>
        <end position="1420"/>
    </location>
</feature>
<feature type="region of interest" description="Oligomerization" evidence="1">
    <location>
        <begin position="1424"/>
        <end position="1429"/>
    </location>
</feature>
<feature type="active site" description="For protease 2A activity" evidence="1">
    <location>
        <position position="876"/>
    </location>
</feature>
<feature type="active site" description="For protease 2A activity" evidence="1">
    <location>
        <position position="894"/>
    </location>
</feature>
<feature type="active site" description="For protease 2A activity" evidence="1">
    <location>
        <position position="965"/>
    </location>
</feature>
<feature type="active site" description="For protease 3C activity" evidence="10">
    <location>
        <position position="1577"/>
    </location>
</feature>
<feature type="active site" description="For protease 3C activity" evidence="10">
    <location>
        <position position="1608"/>
    </location>
</feature>
<feature type="active site" description="For protease 3C activity" evidence="10">
    <location>
        <position position="1683"/>
    </location>
</feature>
<feature type="binding site" evidence="6">
    <location>
        <position position="911"/>
    </location>
    <ligand>
        <name>Zn(2+)</name>
        <dbReference type="ChEBI" id="CHEBI:29105"/>
        <label>1</label>
        <note>structural</note>
    </ligand>
</feature>
<feature type="binding site" evidence="6">
    <location>
        <position position="913"/>
    </location>
    <ligand>
        <name>Zn(2+)</name>
        <dbReference type="ChEBI" id="CHEBI:29105"/>
        <label>1</label>
        <note>structural</note>
    </ligand>
</feature>
<feature type="binding site" evidence="6">
    <location>
        <position position="971"/>
    </location>
    <ligand>
        <name>Zn(2+)</name>
        <dbReference type="ChEBI" id="CHEBI:29105"/>
        <label>1</label>
        <note>structural</note>
    </ligand>
</feature>
<feature type="binding site" evidence="6">
    <location>
        <position position="973"/>
    </location>
    <ligand>
        <name>Zn(2+)</name>
        <dbReference type="ChEBI" id="CHEBI:29105"/>
        <label>1</label>
        <note>structural</note>
    </ligand>
</feature>
<feature type="binding site" evidence="1">
    <location>
        <position position="1369"/>
    </location>
    <ligand>
        <name>Zn(2+)</name>
        <dbReference type="ChEBI" id="CHEBI:29105"/>
        <label>2</label>
    </ligand>
</feature>
<feature type="binding site" evidence="1">
    <location>
        <position position="1372"/>
    </location>
    <ligand>
        <name>Zn(2+)</name>
        <dbReference type="ChEBI" id="CHEBI:29105"/>
        <label>2</label>
    </ligand>
</feature>
<feature type="binding site" evidence="1">
    <location>
        <position position="1381"/>
    </location>
    <ligand>
        <name>Zn(2+)</name>
        <dbReference type="ChEBI" id="CHEBI:29105"/>
        <label>2</label>
    </ligand>
</feature>
<feature type="binding site" evidence="1">
    <location>
        <position position="1386"/>
    </location>
    <ligand>
        <name>Zn(2+)</name>
        <dbReference type="ChEBI" id="CHEBI:29105"/>
        <label>2</label>
    </ligand>
</feature>
<feature type="binding site" evidence="1">
    <location>
        <position position="1952"/>
    </location>
    <ligand>
        <name>Mg(2+)</name>
        <dbReference type="ChEBI" id="CHEBI:18420"/>
        <label>1</label>
        <note>catalytic; for RdRp activity</note>
    </ligand>
</feature>
<feature type="binding site" evidence="1">
    <location>
        <position position="1952"/>
    </location>
    <ligand>
        <name>Mg(2+)</name>
        <dbReference type="ChEBI" id="CHEBI:18420"/>
        <label>2</label>
        <note>catalytic; for RdRp activity</note>
    </ligand>
</feature>
<feature type="binding site" evidence="1">
    <location>
        <position position="2046"/>
    </location>
    <ligand>
        <name>Mg(2+)</name>
        <dbReference type="ChEBI" id="CHEBI:18420"/>
        <label>1</label>
        <note>catalytic; for RdRp activity</note>
    </ligand>
</feature>
<feature type="binding site" evidence="1">
    <location>
        <position position="2046"/>
    </location>
    <ligand>
        <name>Mg(2+)</name>
        <dbReference type="ChEBI" id="CHEBI:18420"/>
        <label>2</label>
        <note>catalytic; for RdRp activity</note>
    </ligand>
</feature>
<feature type="site" description="Cleavage; by autolysis" evidence="25">
    <location>
        <begin position="69"/>
        <end position="70"/>
    </location>
</feature>
<feature type="site" description="Cleavage; by protease 3C" evidence="2">
    <location>
        <begin position="331"/>
        <end position="332"/>
    </location>
</feature>
<feature type="site" description="Cleavage; by autolysis" evidence="2">
    <location>
        <begin position="856"/>
        <end position="857"/>
    </location>
</feature>
<feature type="site" description="Cleavage; by protease 3C" evidence="2">
    <location>
        <begin position="1002"/>
        <end position="1003"/>
    </location>
</feature>
<feature type="site" description="Cleavage; by protease 3C" evidence="2">
    <location>
        <begin position="1099"/>
        <end position="1100"/>
    </location>
</feature>
<feature type="site" description="Involved in the interaction with host RTN3" evidence="5">
    <location>
        <position position="1125"/>
    </location>
</feature>
<feature type="site" description="Cleavage; by protease 3C" evidence="2">
    <location>
        <begin position="1429"/>
        <end position="1430"/>
    </location>
</feature>
<feature type="site" description="Cleavage; by protease 3C" evidence="2">
    <location>
        <begin position="1514"/>
        <end position="1515"/>
    </location>
</feature>
<feature type="site" description="Cleavage; by protease 3C" evidence="2">
    <location>
        <begin position="1537"/>
        <end position="1538"/>
    </location>
</feature>
<feature type="site" description="Cleavage; by protease 3C" evidence="2">
    <location>
        <begin position="1719"/>
        <end position="1720"/>
    </location>
</feature>
<feature type="modified residue" description="O-(5'-phospho-RNA)-tyrosine" evidence="1">
    <location>
        <position position="1517"/>
    </location>
</feature>
<feature type="lipid moiety-binding region" description="N-myristoyl glycine; by host" evidence="1">
    <location>
        <position position="2"/>
    </location>
</feature>
<feature type="mutagenesis site" description="Inhibits protease 3C activity on host NLRP1." evidence="17">
    <original>C</original>
    <variation>A</variation>
    <location>
        <position position="1683"/>
    </location>
</feature>
<feature type="sequence conflict" description="In Ref. 3; AAA45756." evidence="20" ref="3">
    <original>P</original>
    <variation>L</variation>
    <location>
        <position position="368"/>
    </location>
</feature>
<feature type="sequence conflict" description="In Ref. 3; AAA45756." evidence="20" ref="3">
    <original>I</original>
    <variation>T</variation>
    <location>
        <position position="459"/>
    </location>
</feature>
<feature type="sequence conflict" description="In Ref. 3; AAA45756." evidence="20" ref="3">
    <original>P</original>
    <variation>H</variation>
    <location>
        <position position="722"/>
    </location>
</feature>
<feature type="sequence conflict" description="In Ref. 3." evidence="20" ref="3">
    <original>NP</original>
    <variation>KS</variation>
    <location>
        <begin position="726"/>
        <end position="727"/>
    </location>
</feature>
<feature type="sequence conflict" description="In Ref. 3." evidence="20" ref="3">
    <original>EWD</original>
    <variation>RVG</variation>
    <location>
        <begin position="729"/>
        <end position="731"/>
    </location>
</feature>
<feature type="sequence conflict" description="In Ref. 3; AAA45756." evidence="20" ref="3">
    <original>C</original>
    <variation>R</variation>
    <location>
        <position position="913"/>
    </location>
</feature>
<feature type="sequence conflict" description="In Ref. 3; AAA45756." evidence="20" ref="3">
    <original>N</original>
    <variation>S</variation>
    <location>
        <position position="942"/>
    </location>
</feature>
<feature type="sequence conflict" description="In Ref. 3; AAA45756." evidence="20" ref="3">
    <original>P</original>
    <variation>L</variation>
    <location>
        <position position="962"/>
    </location>
</feature>
<feature type="sequence conflict" description="In Ref. 3; AAA45756." evidence="20" ref="3">
    <original>G</original>
    <variation>E</variation>
    <location>
        <position position="982"/>
    </location>
</feature>
<feature type="sequence conflict" description="In Ref. 3; AAA45756." evidence="20" ref="3">
    <original>L</original>
    <variation>F</variation>
    <location>
        <position position="1193"/>
    </location>
</feature>
<feature type="sequence conflict" description="In Ref. 2; AAA45758." evidence="20" ref="2">
    <original>L</original>
    <variation>H</variation>
    <location>
        <position position="1193"/>
    </location>
</feature>
<feature type="sequence conflict" description="In Ref. 2 and 3." evidence="20" ref="2 3">
    <original>I</original>
    <variation>T</variation>
    <location>
        <position position="1220"/>
    </location>
</feature>
<feature type="sequence conflict" description="In Ref. 2 and 3." evidence="20" ref="2 3">
    <original>I</original>
    <variation>V</variation>
    <location>
        <position position="1399"/>
    </location>
</feature>
<feature type="sequence conflict" description="In Ref. 3; AAA45756." evidence="20" ref="3">
    <original>P</original>
    <variation>S</variation>
    <location>
        <position position="1446"/>
    </location>
</feature>
<feature type="sequence conflict" description="In Ref. 3; AAA45756." evidence="20" ref="3">
    <original>P</original>
    <variation>A</variation>
    <location>
        <position position="1739"/>
    </location>
</feature>
<feature type="strand" evidence="32">
    <location>
        <begin position="33"/>
        <end position="35"/>
    </location>
</feature>
<feature type="helix" evidence="40">
    <location>
        <begin position="36"/>
        <end position="38"/>
    </location>
</feature>
<feature type="helix" evidence="40">
    <location>
        <begin position="51"/>
        <end position="54"/>
    </location>
</feature>
<feature type="strand" evidence="40">
    <location>
        <begin position="57"/>
        <end position="59"/>
    </location>
</feature>
<feature type="strand" evidence="40">
    <location>
        <begin position="83"/>
        <end position="87"/>
    </location>
</feature>
<feature type="strand" evidence="40">
    <location>
        <begin position="90"/>
        <end position="96"/>
    </location>
</feature>
<feature type="strand" evidence="41">
    <location>
        <begin position="100"/>
        <end position="102"/>
    </location>
</feature>
<feature type="helix" evidence="40">
    <location>
        <begin position="103"/>
        <end position="105"/>
    </location>
</feature>
<feature type="turn" evidence="40">
    <location>
        <begin position="113"/>
        <end position="115"/>
    </location>
</feature>
<feature type="helix" evidence="40">
    <location>
        <begin position="126"/>
        <end position="129"/>
    </location>
</feature>
<feature type="strand" evidence="40">
    <location>
        <begin position="138"/>
        <end position="140"/>
    </location>
</feature>
<feature type="strand" evidence="40">
    <location>
        <begin position="147"/>
        <end position="151"/>
    </location>
</feature>
<feature type="helix" evidence="40">
    <location>
        <begin position="153"/>
        <end position="155"/>
    </location>
</feature>
<feature type="helix" evidence="40">
    <location>
        <begin position="159"/>
        <end position="167"/>
    </location>
</feature>
<feature type="strand" evidence="40">
    <location>
        <begin position="168"/>
        <end position="180"/>
    </location>
</feature>
<feature type="strand" evidence="40">
    <location>
        <begin position="188"/>
        <end position="197"/>
    </location>
</feature>
<feature type="strand" evidence="40">
    <location>
        <begin position="203"/>
        <end position="205"/>
    </location>
</feature>
<feature type="helix" evidence="40">
    <location>
        <begin position="213"/>
        <end position="216"/>
    </location>
</feature>
<feature type="helix" evidence="40">
    <location>
        <begin position="219"/>
        <end position="221"/>
    </location>
</feature>
<feature type="helix" evidence="31">
    <location>
        <begin position="225"/>
        <end position="227"/>
    </location>
</feature>
<feature type="helix" evidence="40">
    <location>
        <begin position="238"/>
        <end position="240"/>
    </location>
</feature>
<feature type="turn" evidence="40">
    <location>
        <begin position="241"/>
        <end position="243"/>
    </location>
</feature>
<feature type="helix" evidence="40">
    <location>
        <begin position="247"/>
        <end position="252"/>
    </location>
</feature>
<feature type="strand" evidence="40">
    <location>
        <begin position="253"/>
        <end position="259"/>
    </location>
</feature>
<feature type="turn" evidence="40">
    <location>
        <begin position="260"/>
        <end position="262"/>
    </location>
</feature>
<feature type="strand" evidence="40">
    <location>
        <begin position="264"/>
        <end position="270"/>
    </location>
</feature>
<feature type="strand" evidence="40">
    <location>
        <begin position="275"/>
        <end position="279"/>
    </location>
</feature>
<feature type="strand" evidence="40">
    <location>
        <begin position="281"/>
        <end position="284"/>
    </location>
</feature>
<feature type="strand" evidence="40">
    <location>
        <begin position="287"/>
        <end position="298"/>
    </location>
</feature>
<feature type="strand" evidence="40">
    <location>
        <begin position="307"/>
        <end position="323"/>
    </location>
</feature>
<feature type="turn" evidence="40">
    <location>
        <begin position="339"/>
        <end position="342"/>
    </location>
</feature>
<feature type="strand" evidence="40">
    <location>
        <begin position="354"/>
        <end position="356"/>
    </location>
</feature>
<feature type="strand" evidence="39">
    <location>
        <begin position="368"/>
        <end position="373"/>
    </location>
</feature>
<feature type="helix" evidence="40">
    <location>
        <begin position="374"/>
        <end position="377"/>
    </location>
</feature>
<feature type="turn" evidence="33">
    <location>
        <begin position="386"/>
        <end position="389"/>
    </location>
</feature>
<feature type="strand" evidence="40">
    <location>
        <begin position="390"/>
        <end position="392"/>
    </location>
</feature>
<feature type="helix" evidence="40">
    <location>
        <begin position="395"/>
        <end position="398"/>
    </location>
</feature>
<feature type="strand" evidence="40">
    <location>
        <begin position="399"/>
        <end position="402"/>
    </location>
</feature>
<feature type="strand" evidence="40">
    <location>
        <begin position="410"/>
        <end position="415"/>
    </location>
</feature>
<feature type="helix" evidence="40">
    <location>
        <begin position="421"/>
        <end position="423"/>
    </location>
</feature>
<feature type="helix" evidence="40">
    <location>
        <begin position="427"/>
        <end position="432"/>
    </location>
</feature>
<feature type="strand" evidence="40">
    <location>
        <begin position="435"/>
        <end position="440"/>
    </location>
</feature>
<feature type="strand" evidence="40">
    <location>
        <begin position="442"/>
        <end position="448"/>
    </location>
</feature>
<feature type="strand" evidence="40">
    <location>
        <begin position="455"/>
        <end position="463"/>
    </location>
</feature>
<feature type="strand" evidence="40">
    <location>
        <begin position="471"/>
        <end position="473"/>
    </location>
</feature>
<feature type="helix" evidence="40">
    <location>
        <begin position="474"/>
        <end position="477"/>
    </location>
</feature>
<feature type="strand" evidence="40">
    <location>
        <begin position="479"/>
        <end position="485"/>
    </location>
</feature>
<feature type="strand" evidence="40">
    <location>
        <begin position="487"/>
        <end position="489"/>
    </location>
</feature>
<feature type="strand" evidence="40">
    <location>
        <begin position="491"/>
        <end position="496"/>
    </location>
</feature>
<feature type="strand" evidence="40">
    <location>
        <begin position="501"/>
        <end position="503"/>
    </location>
</feature>
<feature type="strand" evidence="40">
    <location>
        <begin position="505"/>
        <end position="508"/>
    </location>
</feature>
<feature type="strand" evidence="31">
    <location>
        <begin position="509"/>
        <end position="512"/>
    </location>
</feature>
<feature type="strand" evidence="40">
    <location>
        <begin position="517"/>
        <end position="527"/>
    </location>
</feature>
<feature type="strand" evidence="40">
    <location>
        <begin position="536"/>
        <end position="544"/>
    </location>
</feature>
<feature type="strand" evidence="40">
    <location>
        <begin position="549"/>
        <end position="553"/>
    </location>
</feature>
<feature type="strand" evidence="40">
    <location>
        <begin position="557"/>
        <end position="559"/>
    </location>
</feature>
<feature type="helix" evidence="31">
    <location>
        <begin position="580"/>
        <end position="582"/>
    </location>
</feature>
<feature type="strand" evidence="40">
    <location>
        <begin position="585"/>
        <end position="587"/>
    </location>
</feature>
<feature type="helix" evidence="40">
    <location>
        <begin position="604"/>
        <end position="606"/>
    </location>
</feature>
<feature type="helix" evidence="40">
    <location>
        <begin position="614"/>
        <end position="616"/>
    </location>
</feature>
<feature type="helix" evidence="40">
    <location>
        <begin position="630"/>
        <end position="632"/>
    </location>
</feature>
<feature type="helix" evidence="40">
    <location>
        <begin position="634"/>
        <end position="637"/>
    </location>
</feature>
<feature type="strand" evidence="40">
    <location>
        <begin position="642"/>
        <end position="651"/>
    </location>
</feature>
<feature type="turn" evidence="40">
    <location>
        <begin position="660"/>
        <end position="664"/>
    </location>
</feature>
<feature type="strand" evidence="40">
    <location>
        <begin position="665"/>
        <end position="670"/>
    </location>
</feature>
<feature type="strand" evidence="40">
    <location>
        <begin position="673"/>
        <end position="676"/>
    </location>
</feature>
<feature type="helix" evidence="40">
    <location>
        <begin position="677"/>
        <end position="683"/>
    </location>
</feature>
<feature type="strand" evidence="40">
    <location>
        <begin position="686"/>
        <end position="702"/>
    </location>
</feature>
<feature type="strand" evidence="40">
    <location>
        <begin position="714"/>
        <end position="719"/>
    </location>
</feature>
<feature type="strand" evidence="38">
    <location>
        <begin position="722"/>
        <end position="724"/>
    </location>
</feature>
<feature type="strand" evidence="37">
    <location>
        <begin position="729"/>
        <end position="731"/>
    </location>
</feature>
<feature type="helix" evidence="40">
    <location>
        <begin position="733"/>
        <end position="736"/>
    </location>
</feature>
<feature type="strand" evidence="40">
    <location>
        <begin position="738"/>
        <end position="740"/>
    </location>
</feature>
<feature type="strand" evidence="40">
    <location>
        <begin position="742"/>
        <end position="746"/>
    </location>
</feature>
<feature type="strand" evidence="40">
    <location>
        <begin position="749"/>
        <end position="755"/>
    </location>
</feature>
<feature type="strand" evidence="40">
    <location>
        <begin position="760"/>
        <end position="766"/>
    </location>
</feature>
<feature type="strand" evidence="40">
    <location>
        <begin position="772"/>
        <end position="774"/>
    </location>
</feature>
<feature type="strand" evidence="40">
    <location>
        <begin position="776"/>
        <end position="778"/>
    </location>
</feature>
<feature type="strand" evidence="34">
    <location>
        <begin position="780"/>
        <end position="782"/>
    </location>
</feature>
<feature type="helix" evidence="40">
    <location>
        <begin position="784"/>
        <end position="786"/>
    </location>
</feature>
<feature type="strand" evidence="40">
    <location>
        <begin position="790"/>
        <end position="795"/>
    </location>
</feature>
<feature type="strand" evidence="40">
    <location>
        <begin position="804"/>
        <end position="822"/>
    </location>
</feature>
<feature type="strand" evidence="32">
    <location>
        <begin position="832"/>
        <end position="834"/>
    </location>
</feature>
<feature type="helix" evidence="42">
    <location>
        <begin position="1446"/>
        <end position="1455"/>
    </location>
</feature>
<feature type="helix" evidence="42">
    <location>
        <begin position="1459"/>
        <end position="1467"/>
    </location>
</feature>
<feature type="strand" evidence="42">
    <location>
        <begin position="1470"/>
        <end position="1473"/>
    </location>
</feature>
<feature type="strand" evidence="42">
    <location>
        <begin position="1479"/>
        <end position="1482"/>
    </location>
</feature>
<feature type="helix" evidence="43">
    <location>
        <begin position="1542"/>
        <end position="1550"/>
    </location>
</feature>
<feature type="strand" evidence="43">
    <location>
        <begin position="1552"/>
        <end position="1557"/>
    </location>
</feature>
<feature type="strand" evidence="43">
    <location>
        <begin position="1560"/>
        <end position="1569"/>
    </location>
</feature>
<feature type="strand" evidence="43">
    <location>
        <begin position="1571"/>
        <end position="1575"/>
    </location>
</feature>
<feature type="helix" evidence="43">
    <location>
        <begin position="1576"/>
        <end position="1578"/>
    </location>
</feature>
<feature type="strand" evidence="43">
    <location>
        <begin position="1582"/>
        <end position="1586"/>
    </location>
</feature>
<feature type="strand" evidence="43">
    <location>
        <begin position="1589"/>
        <end position="1600"/>
    </location>
</feature>
<feature type="turn" evidence="36">
    <location>
        <begin position="1602"/>
        <end position="1604"/>
    </location>
</feature>
<feature type="strand" evidence="43">
    <location>
        <begin position="1606"/>
        <end position="1614"/>
    </location>
</feature>
<feature type="helix" evidence="43">
    <location>
        <begin position="1624"/>
        <end position="1626"/>
    </location>
</feature>
<feature type="strand" evidence="43">
    <location>
        <begin position="1635"/>
        <end position="1642"/>
    </location>
</feature>
<feature type="strand" evidence="43">
    <location>
        <begin position="1645"/>
        <end position="1663"/>
    </location>
</feature>
<feature type="strand" evidence="43">
    <location>
        <begin position="1666"/>
        <end position="1676"/>
    </location>
</feature>
<feature type="helix" evidence="43">
    <location>
        <begin position="1680"/>
        <end position="1682"/>
    </location>
</feature>
<feature type="strand" evidence="43">
    <location>
        <begin position="1686"/>
        <end position="1689"/>
    </location>
</feature>
<feature type="strand" evidence="43">
    <location>
        <begin position="1692"/>
        <end position="1700"/>
    </location>
</feature>
<feature type="strand" evidence="43">
    <location>
        <begin position="1702"/>
        <end position="1709"/>
    </location>
</feature>
<feature type="helix" evidence="43">
    <location>
        <begin position="1712"/>
        <end position="1714"/>
    </location>
</feature>
<feature type="strand" evidence="35">
    <location>
        <begin position="1721"/>
        <end position="1726"/>
    </location>
</feature>
<feature type="helix" evidence="35">
    <location>
        <begin position="1728"/>
        <end position="1731"/>
    </location>
</feature>
<feature type="helix" evidence="35">
    <location>
        <begin position="1748"/>
        <end position="1750"/>
    </location>
</feature>
<feature type="helix" evidence="35">
    <location>
        <begin position="1773"/>
        <end position="1778"/>
    </location>
</feature>
<feature type="helix" evidence="35">
    <location>
        <begin position="1791"/>
        <end position="1805"/>
    </location>
</feature>
<feature type="helix" evidence="35">
    <location>
        <begin position="1816"/>
        <end position="1821"/>
    </location>
</feature>
<feature type="strand" evidence="35">
    <location>
        <begin position="1824"/>
        <end position="1826"/>
    </location>
</feature>
<feature type="helix" evidence="35">
    <location>
        <begin position="1839"/>
        <end position="1842"/>
    </location>
</feature>
<feature type="helix" evidence="35">
    <location>
        <begin position="1846"/>
        <end position="1849"/>
    </location>
</feature>
<feature type="turn" evidence="35">
    <location>
        <begin position="1852"/>
        <end position="1855"/>
    </location>
</feature>
<feature type="helix" evidence="35">
    <location>
        <begin position="1858"/>
        <end position="1867"/>
    </location>
</feature>
<feature type="strand" evidence="35">
    <location>
        <begin position="1873"/>
        <end position="1877"/>
    </location>
</feature>
<feature type="helix" evidence="35">
    <location>
        <begin position="1884"/>
        <end position="1888"/>
    </location>
</feature>
<feature type="strand" evidence="35">
    <location>
        <begin position="1894"/>
        <end position="1897"/>
    </location>
</feature>
<feature type="helix" evidence="35">
    <location>
        <begin position="1900"/>
        <end position="1906"/>
    </location>
</feature>
<feature type="turn" evidence="35">
    <location>
        <begin position="1907"/>
        <end position="1909"/>
    </location>
</feature>
<feature type="helix" evidence="35">
    <location>
        <begin position="1911"/>
        <end position="1919"/>
    </location>
</feature>
<feature type="turn" evidence="35">
    <location>
        <begin position="1923"/>
        <end position="1926"/>
    </location>
</feature>
<feature type="helix" evidence="35">
    <location>
        <begin position="1933"/>
        <end position="1936"/>
    </location>
</feature>
<feature type="helix" evidence="35">
    <location>
        <begin position="1937"/>
        <end position="1939"/>
    </location>
</feature>
<feature type="helix" evidence="35">
    <location>
        <begin position="1940"/>
        <end position="1943"/>
    </location>
</feature>
<feature type="strand" evidence="35">
    <location>
        <begin position="1949"/>
        <end position="1955"/>
    </location>
</feature>
<feature type="helix" evidence="35">
    <location>
        <begin position="1957"/>
        <end position="1959"/>
    </location>
</feature>
<feature type="helix" evidence="35">
    <location>
        <begin position="1962"/>
        <end position="1975"/>
    </location>
</feature>
<feature type="turn" evidence="35">
    <location>
        <begin position="1978"/>
        <end position="1981"/>
    </location>
</feature>
<feature type="helix" evidence="35">
    <location>
        <begin position="1982"/>
        <end position="1987"/>
    </location>
</feature>
<feature type="strand" evidence="35">
    <location>
        <begin position="1988"/>
        <end position="1992"/>
    </location>
</feature>
<feature type="strand" evidence="35">
    <location>
        <begin position="1994"/>
        <end position="2002"/>
    </location>
</feature>
<feature type="strand" evidence="35">
    <location>
        <begin position="2008"/>
        <end position="2010"/>
    </location>
</feature>
<feature type="helix" evidence="35">
    <location>
        <begin position="2011"/>
        <end position="2030"/>
    </location>
</feature>
<feature type="helix" evidence="35">
    <location>
        <begin position="2036"/>
        <end position="2038"/>
    </location>
</feature>
<feature type="strand" evidence="35">
    <location>
        <begin position="2040"/>
        <end position="2044"/>
    </location>
</feature>
<feature type="strand" evidence="35">
    <location>
        <begin position="2047"/>
        <end position="2051"/>
    </location>
</feature>
<feature type="helix" evidence="35">
    <location>
        <begin position="2058"/>
        <end position="2065"/>
    </location>
</feature>
<feature type="turn" evidence="35">
    <location>
        <begin position="2066"/>
        <end position="2069"/>
    </location>
</feature>
<feature type="turn" evidence="35">
    <location>
        <begin position="2086"/>
        <end position="2088"/>
    </location>
</feature>
<feature type="strand" evidence="35">
    <location>
        <begin position="2094"/>
        <end position="2098"/>
    </location>
</feature>
<feature type="strand" evidence="35">
    <location>
        <begin position="2100"/>
        <end position="2102"/>
    </location>
</feature>
<feature type="strand" evidence="35">
    <location>
        <begin position="2105"/>
        <end position="2109"/>
    </location>
</feature>
<feature type="helix" evidence="35">
    <location>
        <begin position="2112"/>
        <end position="2119"/>
    </location>
</feature>
<feature type="strand" evidence="35">
    <location>
        <begin position="2121"/>
        <end position="2124"/>
    </location>
</feature>
<feature type="turn" evidence="35">
    <location>
        <begin position="2125"/>
        <end position="2127"/>
    </location>
</feature>
<feature type="helix" evidence="35">
    <location>
        <begin position="2128"/>
        <end position="2139"/>
    </location>
</feature>
<feature type="helix" evidence="35">
    <location>
        <begin position="2140"/>
        <end position="2142"/>
    </location>
</feature>
<feature type="helix" evidence="35">
    <location>
        <begin position="2144"/>
        <end position="2154"/>
    </location>
</feature>
<feature type="helix" evidence="35">
    <location>
        <begin position="2158"/>
        <end position="2162"/>
    </location>
</feature>
<feature type="helix" evidence="35">
    <location>
        <begin position="2168"/>
        <end position="2177"/>
    </location>
</feature>
<organism>
    <name type="scientific">Human rhinovirus 14</name>
    <name type="common">HRV-14</name>
    <dbReference type="NCBI Taxonomy" id="12131"/>
    <lineage>
        <taxon>Viruses</taxon>
        <taxon>Riboviria</taxon>
        <taxon>Orthornavirae</taxon>
        <taxon>Pisuviricota</taxon>
        <taxon>Pisoniviricetes</taxon>
        <taxon>Picornavirales</taxon>
        <taxon>Picornaviridae</taxon>
        <taxon>Ensavirinae</taxon>
        <taxon>Enterovirus</taxon>
        <taxon>Rhinovirus B</taxon>
    </lineage>
</organism>
<sequence length="2179" mass="242991">MGAQVSTQKSGSHENQNILTNGSNQTFTVINYYKDAASTSSAGQSLSMDPSKFTEPVKDLMLKGAPALNSPNVEACGYSDRVQQITLGNSTITTQEAANAVVCYAEWPEYLPDVDASDVNKTSKPDTSVCRFYTLDSKTWTTGSKGWCWKLPDALKDMGVFGQNMFFHSLGRSGYTVHVQCNATKFHSGCLLVVVIPEHQLASHEGGNVSVKYTFTHPGERGIDLSSANEVGGPVKDVIYNMNGTLLGNLLIFPHQFINLRTNNTATIVIPYINSVPIDSMTRHNNVSLMVIPIAPLTVPTGATPSLPITVTIAPMCTEFSGIRSKSIVPQGLPTTTLPGSGQFLTTDDRQSPSALPNYEPTPRIHIPGKVHNLLEIIQVDTLIPMNNTHTKDEVNSYLIPLNANRQNEQVFGTNLFIGDGVFKTTLLGEIVQYYTHWSGSLRFSLMYTGPALSSAKLILAYTPPGARGPQDRREAMLGTHVVWDIGLQSTIVMTIPWTSGVQFRYTDPDTYTSAGFLSCWYQTSLILPPETTGQVYLLSFISACPDFKLRLMKDTQTISQTVALTEGLGDELEEVIVEKTKQTVASISSGPKHTQKVPILTANETGATMPVLPSDSIETRTTYMHFNGSETDVECFLGRAACVHVTEIQNKDATGIDNHREAKLFNDWKINLSSLVQLRKKLELFTYVRFDSEYTILATASQPDSANYSSNLVVQAMYVPPGAPNPKEWDDYTWQSASNPSVFFKVGDTSRFSVPYVGLASAYNCFYDGYSHDDAETQYGITVLNHMGSMAFRIVNEHDEHKTLVKIRVYHRAKHVEAWIPRAPRALPYTSIGRTNYPKNTEPVIKKRKGDIKSYGLGPRYGGIYTSNVKIMNYHLMTPEDHHNLIAPYPNRDLAIVSTGGHGAETIPHCNCTSGVYYSTYYRKYYPIICEKPTNIWIEGNPYYPSRFQAGVMKGVGPAEPGDCGGILRCIHGPIGLLTAGGSGYVCFADIRQLECIAEEQGLSDYITGLGRAFGVGFTDQISTKVTELQEVAKDFLTTKVLSKVVKMVSALVIICRNHDDLVTVTATLALLGCDGSPWRFLKMYISKHFQVPYIERQANDGWFRKFNDACNAAKGLEWIANKISKLIEWIKNKVLPQAKEKLEFCSKLKQLDILERQITTMHISNPTQEKREQLFNNVLWLEQMSQKFAPLYAVESKRIRELKNKMVNYMQFKSKQRIEPVCVLIHGTPGSGKSLTTSIVGRAIAEHFNSAVYSLPPDPKHFDGYQQQEVVIMDDLNQNPDGQDISMFCQMVSSVDFLPPMASLDNKGMLFTSNFVLASTNSNTLSPPTILNPEALVRRFGFDLDICLHTTYTKNGKLNAGMSTKTCKDCHQPSNFKKCCPLVCGKAISLVDRTTNIRYSVDQLVTAIISDFKSKMQITDSLETLFQGPVYKDLEIDVCNTPPPECINDLLKSVDSEEIREYCKKKKWIIPEIPTNIERAMNQASMIINTILMFVSTLGIVYVIYKLFAQTQGPYSGNPPHNKLKAPTLRPVVVQGPNTEFALSLLRKNIMTITTSKGEFTGLGIHDRVCVIPTHAQPGDDVLVNGQKIRVKDKYKLVDPENINLELTVLTLDRNEKFRDIRGFISEDLEGVDATLVVHSNNFTNTILEVGPVTMAGLINLSSTPTNRMIRYDYATKTGQCGGVLCATGKIFGIHVGGNGRQGFSAQLKKQYFVEKQGQVIARHKVREFNINPVNTPTKSKLHPSVFYDVFPGDKEPAVLSDNDPRLEVKLTESLFSKYKGNVNTEPTENMLVAVDHYAGQLLSLDIPTSELTLKEALYGVDGLEPIDITTSAGFPYVSLGIKKRDILNKETQDTEKMKFYLDKYGIDLPLVTYIKDELRSVDKVRLGKSRLIEASSLNDSVNMRMKLGNLYKAFHQNPGVLTGSAVGCDPDVFWSVIPCLMDGHLMAFDYSNFDASLSPVWFVCLEKVLTKLGFAGSSLIQSICNTHHIFRDEIYVVEGGMPSGCSGTSIFNSMINNIIIRTLILDAYKGIDLDKLKILAYGDDLIVSYPYELDPQVLATLGKNYGLTITPPDKSETFTKMTWENLTFLKRYFKPDQQFPFLVHPVMPMKDIHESIRWTKDPKNTQDHVRSLCMLAWHSGEKEYNEFIQKIRTTDIGKCLILPEYSVLRRRWLDLF</sequence>
<evidence type="ECO:0000250" key="1">
    <source>
        <dbReference type="UniProtKB" id="P03300"/>
    </source>
</evidence>
<evidence type="ECO:0000250" key="2">
    <source>
        <dbReference type="UniProtKB" id="P03301"/>
    </source>
</evidence>
<evidence type="ECO:0000250" key="3">
    <source>
        <dbReference type="UniProtKB" id="P03313"/>
    </source>
</evidence>
<evidence type="ECO:0000250" key="4">
    <source>
        <dbReference type="UniProtKB" id="P04936"/>
    </source>
</evidence>
<evidence type="ECO:0000250" key="5">
    <source>
        <dbReference type="UniProtKB" id="Q66478"/>
    </source>
</evidence>
<evidence type="ECO:0000250" key="6">
    <source>
        <dbReference type="UniProtKB" id="Q9QF31"/>
    </source>
</evidence>
<evidence type="ECO:0000255" key="7"/>
<evidence type="ECO:0000255" key="8">
    <source>
        <dbReference type="PROSITE-ProRule" id="PRU00539"/>
    </source>
</evidence>
<evidence type="ECO:0000255" key="9">
    <source>
        <dbReference type="PROSITE-ProRule" id="PRU00551"/>
    </source>
</evidence>
<evidence type="ECO:0000255" key="10">
    <source>
        <dbReference type="PROSITE-ProRule" id="PRU01222"/>
    </source>
</evidence>
<evidence type="ECO:0000256" key="11">
    <source>
        <dbReference type="SAM" id="MobiDB-lite"/>
    </source>
</evidence>
<evidence type="ECO:0000269" key="12">
    <source>
    </source>
</evidence>
<evidence type="ECO:0000269" key="13">
    <source>
    </source>
</evidence>
<evidence type="ECO:0000269" key="14">
    <source>
    </source>
</evidence>
<evidence type="ECO:0000269" key="15">
    <source>
    </source>
</evidence>
<evidence type="ECO:0000269" key="16">
    <source>
    </source>
</evidence>
<evidence type="ECO:0000269" key="17">
    <source>
    </source>
</evidence>
<evidence type="ECO:0000269" key="18">
    <source>
    </source>
</evidence>
<evidence type="ECO:0000269" key="19">
    <source>
    </source>
</evidence>
<evidence type="ECO:0000305" key="20"/>
<evidence type="ECO:0000305" key="21">
    <source>
    </source>
</evidence>
<evidence type="ECO:0000305" key="22">
    <source>
    </source>
</evidence>
<evidence type="ECO:0000305" key="23">
    <source>
    </source>
</evidence>
<evidence type="ECO:0000305" key="24">
    <source>
    </source>
</evidence>
<evidence type="ECO:0000305" key="25">
    <source>
    </source>
</evidence>
<evidence type="ECO:0007744" key="26">
    <source>
        <dbReference type="PDB" id="5W3E"/>
    </source>
</evidence>
<evidence type="ECO:0007744" key="27">
    <source>
        <dbReference type="PDB" id="5W3L"/>
    </source>
</evidence>
<evidence type="ECO:0007744" key="28">
    <source>
        <dbReference type="PDB" id="5W3M"/>
    </source>
</evidence>
<evidence type="ECO:0007744" key="29">
    <source>
        <dbReference type="PDB" id="5W3O"/>
    </source>
</evidence>
<evidence type="ECO:0007744" key="30">
    <source>
        <dbReference type="PDB" id="6HLT"/>
    </source>
</evidence>
<evidence type="ECO:0007829" key="31">
    <source>
        <dbReference type="PDB" id="1K5M"/>
    </source>
</evidence>
<evidence type="ECO:0007829" key="32">
    <source>
        <dbReference type="PDB" id="1NCQ"/>
    </source>
</evidence>
<evidence type="ECO:0007829" key="33">
    <source>
        <dbReference type="PDB" id="1R09"/>
    </source>
</evidence>
<evidence type="ECO:0007829" key="34">
    <source>
        <dbReference type="PDB" id="1RUE"/>
    </source>
</evidence>
<evidence type="ECO:0007829" key="35">
    <source>
        <dbReference type="PDB" id="1XR5"/>
    </source>
</evidence>
<evidence type="ECO:0007829" key="36">
    <source>
        <dbReference type="PDB" id="2B0F"/>
    </source>
</evidence>
<evidence type="ECO:0007829" key="37">
    <source>
        <dbReference type="PDB" id="2HWB"/>
    </source>
</evidence>
<evidence type="ECO:0007829" key="38">
    <source>
        <dbReference type="PDB" id="2RM2"/>
    </source>
</evidence>
<evidence type="ECO:0007829" key="39">
    <source>
        <dbReference type="PDB" id="5W3E"/>
    </source>
</evidence>
<evidence type="ECO:0007829" key="40">
    <source>
        <dbReference type="PDB" id="5W3M"/>
    </source>
</evidence>
<evidence type="ECO:0007829" key="41">
    <source>
        <dbReference type="PDB" id="5W3O"/>
    </source>
</evidence>
<evidence type="ECO:0007829" key="42">
    <source>
        <dbReference type="PDB" id="6HLT"/>
    </source>
</evidence>
<evidence type="ECO:0007829" key="43">
    <source>
        <dbReference type="PDB" id="6KYZ"/>
    </source>
</evidence>
<comment type="function">
    <molecule>Capsid protein VP1</molecule>
    <text evidence="1 12 15 22">Forms an icosahedral capsid of pseudo T=3 symmetry with capsid proteins VP2 and VP3. The capsid is 300 Angstroms in diameter, composed of 60 copies of each capsid protein and enclosing the viral positive strand RNA genome (By similarity). Capsid protein VP1 mainly forms the vertices of the capsid. Capsid protein VP1 interacts with host ICAM1 to provide virion attachment to target host cells (PubMed:10562537). This attachment induces virion internalization (By similarity). Tyrosine kinases are probably involved in the entry process. After binding to its receptor, the capsid undergoes conformational changes (By similarity). Capsid protein VP1 N-terminus (that contains an amphipathic alpha-helix) and capsid protein VP4 are externalized (Probable). Together, they shape a pore in the host membrane through which viral genome is translocated to host cell cytoplasm (PubMed:28696310). After genome has been released, the channel shrinks.</text>
</comment>
<comment type="function">
    <molecule>Capsid protein VP2</molecule>
    <text evidence="1">Forms an icosahedral capsid of pseudo T=3 symmetry with capsid proteins VP2 and VP3 (By similarity). The capsid is 300 Angstroms in diameter, composed of 60 copies of each capsid protein and enclosing the viral positive strand RNA genome (By similarity).</text>
</comment>
<comment type="function">
    <molecule>Capsid protein VP3</molecule>
    <text evidence="1">Forms an icosahedral capsid of pseudo T=3 symmetry with capsid proteins VP2 and VP3 (By similarity). The capsid is 300 Angstroms in diameter, composed of 60 copies of each capsid protein and enclosing the viral positive strand RNA genome (By similarity).</text>
</comment>
<comment type="function">
    <molecule>Capsid protein VP4</molecule>
    <text evidence="1">Lies on the inner surface of the capsid shell (By similarity). After binding to the host receptor, the capsid undergoes conformational changes (By similarity). Capsid protein VP4 is released, Capsid protein VP1 N-terminus is externalized, and together, they shape a pore in the host membrane through which the viral genome is translocated into the host cell cytoplasm (By similarity).</text>
</comment>
<comment type="function">
    <molecule>Capsid protein VP0</molecule>
    <text evidence="1">Component of immature procapsids, which is cleaved into capsid proteins VP4 and VP2 after maturation (By similarity). Allows the capsid to remain inactive before the maturation step (By similarity).</text>
</comment>
<comment type="function">
    <molecule>Protease 2A</molecule>
    <text evidence="1 2 21">Cysteine protease that cleaves viral polyprotein and specific host proteins (By similarity). It is responsible for the autocatalytic cleavage between the P1 and P2 regions, which is the first cleavage occurring in the polyprotein (By similarity). Also cleaves the host translation initiation factor EIF4G1, in order to shut down the capped cellular mRNA translation (By similarity). Inhibits the host nucleus-cytoplasm protein and RNA trafficking by cleaving host members of the nuclear pores including NUP62 and NUP153 (Probable). Counteracts stress granule formation probably by antagonizing its assembly or promoting its dissassembly (By similarity).</text>
</comment>
<comment type="function">
    <molecule>Protein 2B</molecule>
    <text evidence="1">Plays an essential role in the virus replication cycle by acting as a viroporin. Creates a pore in the host endoplasmic reticulum and as a consequence releases Ca2+ in the cytoplasm of infected cell. In turn, high levels of cytoplasmic calcium may trigger membrane trafficking and transport of viral ER-associated proteins to viroplasms, sites of viral genome replication.</text>
</comment>
<comment type="function">
    <molecule>Protein 2C</molecule>
    <text evidence="1">Induces and associates with structural rearrangements of intracellular membranes. Displays RNA-binding, nucleotide binding and NTPase activities. May play a role in virion morphogenesis and viral RNA encapsidation by interacting with the capsid protein VP3.</text>
</comment>
<comment type="function">
    <molecule>Protein 3AB</molecule>
    <text evidence="1">Localizes the viral replication complex to the surface of membranous vesicles. Together with protein 3CD binds the Cis-Active RNA Element (CRE) which is involved in RNA synthesis initiation. Acts as a cofactor to stimulate the activity of 3D polymerase, maybe through a nucleid acid chaperone activity.</text>
</comment>
<comment type="function">
    <molecule>Protein 3A</molecule>
    <text evidence="1 13 23 24">Localizes the viral replication complex to the surface of membranous vesicles (By similarity). It inhibits host cell endoplasmic reticulum-to-Golgi apparatus transport and causes the disassembly of the Golgi complex, possibly through GBF1 interaction (PubMed:17005635). This would result in depletion of MHC, trail receptors and IFN receptors at the host cell surface (PubMed:17005635). Plays an essential role in viral RNA replication by recruiting ACBD3 and PI4KB at the viral replication sites, thereby allowing the formation of the rearranged membranous structures where viral replication takes place (Probable).</text>
</comment>
<comment type="function">
    <molecule>Viral protein genome-linked</molecule>
    <text evidence="1">Acts as a primer for viral RNA replication and remains covalently bound to viral genomic RNA. VPg is uridylylated prior to priming replication into VPg-pUpU. The oriI viral genomic sequence may act as a template for this. The VPg-pUpU is then used as primer on the genomic RNA poly(A) by the RNA-dependent RNA polymerase to replicate the viral genome. During genome replication, the VPg-RNA linkage is removed by the host TDP2, thereby accelerating replication. During the late stage of the replication cycle, host TDP2 is excluded from sites of viral RNA synthesis and encapsidation, allowing for the generation of progeny virions.</text>
</comment>
<comment type="function">
    <molecule>Protein 3CD</molecule>
    <text evidence="1">Involved in the viral replication complex and viral polypeptide maturation. It exhibits protease activity with a specificity and catalytic efficiency that is different from protease 3C. Protein 3CD lacks polymerase activity. Protein 3CD binds to the 5'UTR of the viral genome.</text>
</comment>
<comment type="function">
    <molecule>Protease 3C</molecule>
    <text evidence="1 14 17 18">Major viral protease that mediates proteolytic processing of the polyprotein (By similarity). Cleaves host EIF5B, contributing to host translation shutoff (PubMed:18572216). Cleaves also host PABPC1, contributing to host translation shutoff (By similarity). Cleaves host NLRP1, triggers host N-glycine-mediated degradation of the autoinhibitory NLRP1 N-terminal fragment (PubMed:33093214, PubMed:33410748).</text>
</comment>
<comment type="function">
    <molecule>RNA-directed RNA polymerase</molecule>
    <text evidence="1">Replicates the viral genomic RNA on the surface of intracellular membranes. May form linear arrays of subunits that propagate along a strong head-to-tail interaction called interface-I. Covalently attaches UMP to a tyrosine of VPg, which is used to prime RNA synthesis. The positive stranded RNA genome is first replicated at virus induced membranous vesicles, creating a dsRNA genomic replication form. This dsRNA is then used as template to synthesize positive stranded RNA genomes. ss(+)RNA genomes are either translated, replicated or encapsidated.</text>
</comment>
<comment type="catalytic activity">
    <molecule>Protein 2C</molecule>
    <reaction evidence="1">
        <text>a ribonucleoside 5'-triphosphate + H2O = a ribonucleoside 5'-diphosphate + phosphate + H(+)</text>
        <dbReference type="Rhea" id="RHEA:23680"/>
        <dbReference type="ChEBI" id="CHEBI:15377"/>
        <dbReference type="ChEBI" id="CHEBI:15378"/>
        <dbReference type="ChEBI" id="CHEBI:43474"/>
        <dbReference type="ChEBI" id="CHEBI:57930"/>
        <dbReference type="ChEBI" id="CHEBI:61557"/>
        <dbReference type="EC" id="3.6.1.15"/>
    </reaction>
</comment>
<comment type="catalytic activity">
    <molecule>Protease 2A</molecule>
    <reaction evidence="1">
        <text>Selective cleavage of Tyr-|-Gly bond in the picornavirus polyprotein.</text>
        <dbReference type="EC" id="3.4.22.29"/>
    </reaction>
</comment>
<comment type="catalytic activity">
    <molecule>RNA-directed RNA polymerase</molecule>
    <reaction evidence="8">
        <text>RNA(n) + a ribonucleoside 5'-triphosphate = RNA(n+1) + diphosphate</text>
        <dbReference type="Rhea" id="RHEA:21248"/>
        <dbReference type="Rhea" id="RHEA-COMP:14527"/>
        <dbReference type="Rhea" id="RHEA-COMP:17342"/>
        <dbReference type="ChEBI" id="CHEBI:33019"/>
        <dbReference type="ChEBI" id="CHEBI:61557"/>
        <dbReference type="ChEBI" id="CHEBI:140395"/>
        <dbReference type="EC" id="2.7.7.48"/>
    </reaction>
</comment>
<comment type="catalytic activity">
    <molecule>Protease 3C</molecule>
    <reaction evidence="10">
        <text>Selective cleavage of Gln-|-Gly bond in the poliovirus polyprotein. In other picornavirus reactions Glu may be substituted for Gln, and Ser or Thr for Gly.</text>
        <dbReference type="EC" id="3.4.22.28"/>
    </reaction>
</comment>
<comment type="cofactor">
    <molecule>RNA-directed RNA polymerase</molecule>
    <cofactor evidence="1">
        <name>Mg(2+)</name>
        <dbReference type="ChEBI" id="CHEBI:18420"/>
    </cofactor>
    <text evidence="1 3">Binds 2 magnesium ions that constitute a dinuclear catalytic metal center (By similarity). The magnesium ions are not prebound but only present for catalysis (By similarity). Requires the presence of 3CDpro or 3CPro (By similarity).</text>
</comment>
<comment type="activity regulation">
    <molecule>RNA-directed RNA polymerase</molecule>
    <text evidence="1">Replication or transcription is subject to high level of random mutations by the nucleotide analog ribavirin.</text>
</comment>
<comment type="subunit">
    <molecule>Capsid protein VP0</molecule>
    <text evidence="1">Interacts with capsid protein VP1 and capsid protein VP3 to form heterotrimeric protomers.</text>
</comment>
<comment type="subunit">
    <molecule>Capsid protein VP1</molecule>
    <text evidence="1 12">Interacts with capsid protein VP0, and capsid protein VP3 to form heterotrimeric protomers (By similarity). Five protomers subsequently associate to form pentamers which serve as building blocks for the capsid (By similarity). Interacts with capsid protein VP2, capsid protein VP3 and capsid protein VP4 following cleavage of capsid protein VP0 (By similarity). Interacts with host ICAM1 (PubMed:10562537).</text>
</comment>
<comment type="subunit">
    <molecule>Capsid protein VP2</molecule>
    <text evidence="1">Interacts with capsid protein VP1 and capsid protein VP3 in the mature capsid.</text>
</comment>
<comment type="subunit">
    <molecule>Capsid protein VP3</molecule>
    <text evidence="1">Interacts with capsid protein VP0 and capsid protein VP1 to form heterotrimeric protomers (By similarity). Five protomers subsequently associate to form pentamers which serve as building blocks for the capsid (By similarity). Interacts with capsid protein VP4 in the mature capsid (By similarity). Interacts with protein 2C; this interaction may be important for virion morphogenesis (By similarity).</text>
</comment>
<comment type="subunit">
    <molecule>Capsid protein VP4</molecule>
    <text evidence="1">Interacts with capsid protein VP1 and capsid protein VP3.</text>
</comment>
<comment type="subunit">
    <molecule>Protease 2A</molecule>
    <text evidence="4">Homodimer.</text>
</comment>
<comment type="subunit">
    <molecule>Protein 2C</molecule>
    <text evidence="1">Homohexamer; forms a hexameric ring structure with 6-fold symmetry characteristic of AAA+ ATPases (By similarity). Interacts (via N-terminus) with host RTN3 (via reticulon domain); this interaction is important for viral replication (By similarity). Interacts with capsid protein VP3; this interaction may be important for virion morphogenesis (By similarity).</text>
</comment>
<comment type="subunit">
    <molecule>Protein 3AB</molecule>
    <text evidence="1">Interacts with protein 3CD.</text>
</comment>
<comment type="subunit">
    <molecule>Protein 3A</molecule>
    <text evidence="1 13 16">Homodimer (By similarity). Interacts with host GBF1 (PubMed:17005635). Interacts (via GOLD domain) with host ACBD3 (via GOLD domain); this interaction allows the formation of a viral protein 3A/ACBD3 heterotetramer with a 2:2 stoichiometry, which will stimulate the recruitment of host PI4KB in order to synthesize PI4P at the viral RNA replication sites (PubMed:31381608).</text>
</comment>
<comment type="subunit">
    <molecule>Viral protein genome-linked</molecule>
    <text evidence="1">Interacts with RNA-directed RNA polymerase.</text>
</comment>
<comment type="subunit">
    <molecule>Protein 3CD</molecule>
    <text evidence="1">Interacts with protein 3AB and with RNA-directed RNA polymerase.</text>
</comment>
<comment type="subunit">
    <molecule>RNA-directed RNA polymerase</molecule>
    <text evidence="1">Interacts with Viral protein genome-linked and with protein 3CD.</text>
</comment>
<comment type="subcellular location">
    <molecule>Capsid protein VP0</molecule>
    <subcellularLocation>
        <location>Virion</location>
    </subcellularLocation>
    <subcellularLocation>
        <location evidence="20">Host cytoplasm</location>
    </subcellularLocation>
</comment>
<comment type="subcellular location">
    <molecule>Capsid protein VP4</molecule>
    <subcellularLocation>
        <location>Virion</location>
    </subcellularLocation>
</comment>
<comment type="subcellular location">
    <molecule>Capsid protein VP2</molecule>
    <subcellularLocation>
        <location evidence="1">Virion</location>
    </subcellularLocation>
    <subcellularLocation>
        <location evidence="20">Host cytoplasm</location>
    </subcellularLocation>
</comment>
<comment type="subcellular location">
    <molecule>Capsid protein VP3</molecule>
    <subcellularLocation>
        <location evidence="1">Virion</location>
    </subcellularLocation>
    <subcellularLocation>
        <location evidence="20">Host cytoplasm</location>
    </subcellularLocation>
</comment>
<comment type="subcellular location">
    <molecule>Capsid protein VP1</molecule>
    <subcellularLocation>
        <location evidence="1">Virion</location>
    </subcellularLocation>
    <subcellularLocation>
        <location evidence="20">Host cytoplasm</location>
    </subcellularLocation>
</comment>
<comment type="subcellular location">
    <molecule>Protein 2B</molecule>
    <subcellularLocation>
        <location evidence="20">Host cytoplasmic vesicle membrane</location>
        <topology evidence="20">Peripheral membrane protein</topology>
        <orientation evidence="20">Cytoplasmic side</orientation>
    </subcellularLocation>
    <text>Probably localizes to the surface of intracellular membrane vesicles that are induced after virus infection as the site for viral RNA replication. These vesicles are derived from the endoplasmic reticulum.</text>
</comment>
<comment type="subcellular location">
    <molecule>Protein 2C</molecule>
    <subcellularLocation>
        <location evidence="20">Host cytoplasmic vesicle membrane</location>
        <topology evidence="20">Peripheral membrane protein</topology>
        <orientation evidence="20">Cytoplasmic side</orientation>
    </subcellularLocation>
    <text>Probably localizes to the surface of intracellular membrane vesicles that are induced after virus infection as the site for viral RNA replication. These vesicles are derived from the endoplasmic reticulum.</text>
</comment>
<comment type="subcellular location">
    <molecule>Protein 3A</molecule>
    <subcellularLocation>
        <location evidence="20">Host cytoplasmic vesicle membrane</location>
        <topology evidence="20">Peripheral membrane protein</topology>
        <orientation evidence="20">Cytoplasmic side</orientation>
    </subcellularLocation>
    <text>Probably localizes to the surface of intracellular membrane vesicles that are induced after virus infection as the site for viral RNA replication. These vesicles are derived from the endoplasmic reticulum.</text>
</comment>
<comment type="subcellular location">
    <molecule>Protein 3AB</molecule>
    <subcellularLocation>
        <location evidence="20">Host cytoplasmic vesicle membrane</location>
        <topology evidence="20">Peripheral membrane protein</topology>
        <orientation evidence="20">Cytoplasmic side</orientation>
    </subcellularLocation>
    <text>Probably localizes to the surface of intracellular membrane vesicles that are induced after virus infection as the site for viral RNA replication. These vesicles are derived from the endoplasmic reticulum.</text>
</comment>
<comment type="subcellular location">
    <molecule>Viral protein genome-linked</molecule>
    <subcellularLocation>
        <location evidence="1">Virion</location>
    </subcellularLocation>
    <subcellularLocation>
        <location evidence="5">Host cytoplasm</location>
    </subcellularLocation>
</comment>
<comment type="subcellular location">
    <molecule>Protease 3C</molecule>
    <subcellularLocation>
        <location>Host cytoplasm</location>
    </subcellularLocation>
</comment>
<comment type="subcellular location">
    <molecule>Protein 3CD</molecule>
    <subcellularLocation>
        <location evidence="1">Host nucleus</location>
    </subcellularLocation>
    <subcellularLocation>
        <location evidence="1">Host cytoplasm</location>
    </subcellularLocation>
    <subcellularLocation>
        <location evidence="20">Host cytoplasmic vesicle membrane</location>
        <topology evidence="20">Peripheral membrane protein</topology>
        <orientation evidence="20">Cytoplasmic side</orientation>
    </subcellularLocation>
    <text>Probably localizes to the surface of intracellular membrane vesicles that are induced after virus infection as the site for viral RNA replication. These vesicles are derived from the endoplasmic reticulum.</text>
</comment>
<comment type="subcellular location">
    <molecule>RNA-directed RNA polymerase</molecule>
    <subcellularLocation>
        <location evidence="20">Host cytoplasmic vesicle membrane</location>
        <topology evidence="20">Peripheral membrane protein</topology>
        <orientation evidence="20">Cytoplasmic side</orientation>
    </subcellularLocation>
    <text>Probably localizes to the surface of intracellular membrane vesicles that are induced after virus infection as the site for viral RNA replication. These vesicles are derived from the endoplasmic reticulum.</text>
</comment>
<comment type="domain">
    <molecule>Protein 2C</molecule>
    <text evidence="1">The N-terminus has membrane-binding (By similarity). The N-terminus also displays RNA-binding properties (By similarity). The N-terminus is involved in oligomerization (By similarity). The central part contains an ATPase domain and a C4-type zinc-finger (By similarity). The C-terminus is involved in RNA-binding (By similarity). The extreme C-terminus contains a region involved in oligomerization (By similarity).</text>
</comment>
<comment type="PTM">
    <molecule>Genome polyprotein</molecule>
    <text evidence="1">Specific enzymatic cleavages in vivo by the viral proteases yield processing intermediates and the mature proteins.</text>
</comment>
<comment type="PTM">
    <molecule>Capsid protein VP0</molecule>
    <text evidence="1">Myristoylation is required for the formation of pentamers during virus assembly. Further assembly of 12 pentamers and a molecule of genomic RNA generates the provirion.</text>
</comment>
<comment type="PTM">
    <molecule>Capsid protein VP0</molecule>
    <text evidence="19">During virion maturation, immature virions are rendered infectious following cleavage of VP0 into VP4 and VP2. This maturation seems to be an autocatalytic event triggered by the presence of RNA in the capsid and it is followed by a conformational change infectious virion.</text>
</comment>
<comment type="PTM">
    <molecule>Capsid protein VP4</molecule>
    <text evidence="1">Myristoylation is required during RNA encapsidation and formation of the mature virus particle.</text>
</comment>
<comment type="PTM">
    <molecule>Viral protein genome-linked</molecule>
    <text evidence="1">VPg is uridylylated by the polymerase into VPg-pUpU. This acts as a nucleotide-peptide primer for the genomic RNA replication.</text>
</comment>
<comment type="similarity">
    <text evidence="20">Belongs to the picornaviruses polyprotein family.</text>
</comment>
<comment type="caution">
    <text evidence="20">The PDB data bank contains the 3D-structure coordinates of proteins VP1, VP2, VP3 and VP4.</text>
</comment>
<comment type="online information" name="Virus Particle ExploreR db">
    <link uri="https://viperdb.org/Info_Page.php?VDB=4rhv"/>
    <text>Icosahedral capsid structure</text>
</comment>
<comment type="online information" name="Virus Particle ExploreR db">
    <link uri="https://viperdb.org/Info_Page.php?VDB=2r04"/>
    <text>Icosahedral capsid structure</text>
</comment>
<comment type="online information" name="Virus Particle ExploreR db">
    <link uri="https://viperdb.org/Info_Page.php?VDB=2r06"/>
    <text>Icosahedral capsid structure</text>
</comment>
<comment type="online information" name="Virus Particle ExploreR db">
    <link uri="https://viperdb.org/Info_Page.php?VDB=2r07"/>
    <text>Icosahedral capsid structure</text>
</comment>
<comment type="online information" name="Virus Particle ExploreR db">
    <link uri="https://viperdb.org/Info_Page.php?VDB=2rm2"/>
    <text>Icosahedral capsid structure</text>
</comment>
<comment type="online information" name="Virus Particle ExploreR db">
    <link uri="https://viperdb.org/Info_Page.php?VDB=2rmu"/>
    <text>Icosahedral capsid structure</text>
</comment>
<comment type="online information" name="Virus Particle ExploreR db">
    <link uri="https://viperdb.org/Info_Page.php?VDB=2rr1"/>
    <text>Icosahedral capsid structure</text>
</comment>
<comment type="online information" name="Virus Particle ExploreR db">
    <link uri="https://viperdb.org/Info_Page.php?VDB=2rs1"/>
    <text>Icosahedral capsid structure</text>
</comment>
<comment type="online information" name="Virus Particle ExploreR db">
    <link uri="https://viperdb.org/Info_Page.php?VDB=2rs3"/>
    <text>Icosahedral capsid structure</text>
</comment>
<comment type="online information" name="Virus Particle ExploreR db">
    <link uri="https://viperdb.org/Info_Page.php?VDB=2rs5"/>
    <text>Icosahedral capsid structure</text>
</comment>
<comment type="online information" name="Virus Particle ExploreR db">
    <link uri="https://viperdb.org/Info_Page.php?VDB=2hwb"/>
    <text>Icosahedral capsid structure</text>
</comment>
<comment type="online information" name="Virus Particle ExploreR db">
    <link uri="https://viperdb.org/Info_Page.php?VDB=2hwc"/>
    <text>Icosahedral capsid structure</text>
</comment>
<comment type="online information" name="Virus Particle ExploreR db">
    <link uri="https://viperdb.org/Info_Page.php?VDB=1vrh"/>
    <text>Icosahedral capsid structure</text>
</comment>
<comment type="online information" name="Virus Particle ExploreR db">
    <link uri="https://viperdb.org/Info_Page.php?VDB=1rmu"/>
    <text>Icosahedral capsid structure</text>
</comment>
<comment type="online information" name="Virus Particle ExploreR db">
    <link uri="https://viperdb.org/Info_Page.php?VDB=1ruc"/>
    <text>Icosahedral capsid structure</text>
</comment>
<comment type="online information" name="Virus Particle ExploreR db">
    <link uri="https://viperdb.org/Info_Page.php?VDB=1rud"/>
    <text>Icosahedral capsid structure</text>
</comment>
<comment type="online information" name="Virus Particle ExploreR db">
    <link uri="https://viperdb.org/Info_Page.php?VDB=1rue"/>
    <text>Icosahedral capsid structure</text>
</comment>
<comment type="online information" name="Virus Particle ExploreR db">
    <link uri="https://viperdb.org/Info_Page.php?VDB=1ruf"/>
    <text>Icosahedral capsid structure</text>
</comment>
<comment type="online information" name="Virus Particle ExploreR db">
    <link uri="https://viperdb.org/Info_Page.php?VDB=1rug"/>
    <text>Icosahedral capsid structure</text>
</comment>
<comment type="online information" name="Virus Particle ExploreR db">
    <link uri="https://viperdb.org/Info_Page.php?VDB=1ruh"/>
    <text>Icosahedral capsid structure</text>
</comment>
<comment type="online information" name="Virus Particle ExploreR db">
    <link uri="https://viperdb.org/Info_Page.php?VDB=1rui"/>
    <text>Icosahedral capsid structure</text>
</comment>
<comment type="online information" name="Virus Particle ExploreR db">
    <link uri="https://viperdb.org/Info_Page.php?VDB=1ruj"/>
    <text>Icosahedral capsid structure</text>
</comment>
<comment type="online information" name="Virus Particle ExploreR db">
    <link uri="https://viperdb.org/Info_Page.php?VDB=1rvf"/>
    <text>Icosahedral capsid structure</text>
</comment>
<comment type="online information" name="Virus Particle ExploreR db">
    <link uri="https://viperdb.org/Info_Page.php?VDB=1r08"/>
    <text>Icosahedral capsid structure</text>
</comment>
<comment type="online information" name="Virus Particle ExploreR db">
    <link uri="https://viperdb.org/Info_Page.php?VDB=1r09"/>
    <text>Icosahedral capsid structure</text>
</comment>
<comment type="online information" name="Virus Particle ExploreR db">
    <link uri="https://viperdb.org/Info_Page.php?VDB=1ncq"/>
    <text>Icosahedral capsid structure</text>
</comment>
<comment type="online information" name="Virus Particle ExploreR db">
    <link uri="https://viperdb.org/Info_Page.php?VDB=1na1"/>
    <text>Icosahedral capsid structure</text>
</comment>
<comment type="online information" name="Virus Particle ExploreR db">
    <link uri="https://viperdb.org/Info_Page.php?VDB=1k5m"/>
    <text>Icosahedral capsid structure</text>
</comment>
<comment type="online information" name="Virus Particle ExploreR db">
    <link uri="https://viperdb.org/Info_Page.php?VDB=1d3i"/>
    <text>Icosahedral capsid structure</text>
</comment>
<comment type="online information" name="Virus Particle ExploreR db">
    <link uri="https://viperdb.org/Info_Page.php?VDB=1hri"/>
    <text>Icosahedral capsid structure complexed with antiviral compound SCH 38057</text>
</comment>
<comment type="online information" name="Virus Particle ExploreR db">
    <link uri="https://viperdb.org/Info_Page.php?VDB=1hrv"/>
    <text>Icosahedral capsid structure complexed with antiviral compound SDZ 35-682</text>
</comment>
<protein>
    <recommendedName>
        <fullName>Genome polyprotein</fullName>
    </recommendedName>
    <component>
        <recommendedName>
            <fullName>P1</fullName>
        </recommendedName>
    </component>
    <component>
        <recommendedName>
            <fullName>Capsid protein VP0</fullName>
        </recommendedName>
        <alternativeName>
            <fullName>VP4-VP2</fullName>
        </alternativeName>
    </component>
    <component>
        <recommendedName>
            <fullName>Capsid protein VP4</fullName>
        </recommendedName>
        <alternativeName>
            <fullName>P1A</fullName>
        </alternativeName>
        <alternativeName>
            <fullName>Virion protein 4</fullName>
        </alternativeName>
    </component>
    <component>
        <recommendedName>
            <fullName>Capsid protein VP2</fullName>
        </recommendedName>
        <alternativeName>
            <fullName>P1B</fullName>
        </alternativeName>
        <alternativeName>
            <fullName>Virion protein 2</fullName>
        </alternativeName>
    </component>
    <component>
        <recommendedName>
            <fullName>Capsid protein VP3</fullName>
        </recommendedName>
        <alternativeName>
            <fullName>P1C</fullName>
        </alternativeName>
        <alternativeName>
            <fullName>Virion protein 3</fullName>
        </alternativeName>
    </component>
    <component>
        <recommendedName>
            <fullName>Capsid protein VP1</fullName>
        </recommendedName>
        <alternativeName>
            <fullName>P1D</fullName>
        </alternativeName>
        <alternativeName>
            <fullName>Virion protein 1</fullName>
        </alternativeName>
    </component>
    <component>
        <recommendedName>
            <fullName>P2</fullName>
        </recommendedName>
    </component>
    <component>
        <recommendedName>
            <fullName>Protease 2A</fullName>
            <shortName>P2A</shortName>
            <ecNumber evidence="1">3.4.22.29</ecNumber>
        </recommendedName>
        <alternativeName>
            <fullName>Picornain 2A</fullName>
        </alternativeName>
        <alternativeName>
            <fullName>Protein 2A</fullName>
        </alternativeName>
    </component>
    <component>
        <recommendedName>
            <fullName>Protein 2B</fullName>
            <shortName>P2B</shortName>
        </recommendedName>
    </component>
    <component>
        <recommendedName>
            <fullName>Protein 2C</fullName>
            <shortName>P2C</shortName>
            <ecNumber evidence="1">3.6.1.15</ecNumber>
        </recommendedName>
    </component>
    <component>
        <recommendedName>
            <fullName>P3</fullName>
        </recommendedName>
    </component>
    <component>
        <recommendedName>
            <fullName>Protein 3AB</fullName>
        </recommendedName>
    </component>
    <component>
        <recommendedName>
            <fullName>Protein 3A</fullName>
            <shortName>P3A</shortName>
        </recommendedName>
    </component>
    <component>
        <recommendedName>
            <fullName>Viral protein genome-linked</fullName>
            <shortName>VPg</shortName>
        </recommendedName>
        <alternativeName>
            <fullName>Protein 3B</fullName>
            <shortName>P3B</shortName>
        </alternativeName>
    </component>
    <component>
        <recommendedName>
            <fullName>Protein 3CD</fullName>
            <ecNumber>3.4.22.28</ecNumber>
        </recommendedName>
    </component>
    <component>
        <recommendedName>
            <fullName evidence="10">Protease 3C</fullName>
            <ecNumber evidence="10">3.4.22.28</ecNumber>
        </recommendedName>
        <alternativeName>
            <fullName evidence="10">Picornain 3C</fullName>
            <shortName evidence="10">P3C</shortName>
        </alternativeName>
    </component>
    <component>
        <recommendedName>
            <fullName evidence="8">RNA-directed RNA polymerase</fullName>
            <shortName>RdRp</shortName>
            <ecNumber evidence="8">2.7.7.48</ecNumber>
        </recommendedName>
        <alternativeName>
            <fullName>3D polymerase</fullName>
            <shortName>3Dpol</shortName>
        </alternativeName>
        <alternativeName>
            <fullName>Protein 3D</fullName>
            <shortName>3D</shortName>
        </alternativeName>
    </component>
</protein>
<dbReference type="EC" id="3.4.22.29" evidence="1"/>
<dbReference type="EC" id="3.6.1.15" evidence="1"/>
<dbReference type="EC" id="3.4.22.28" evidence="10"/>
<dbReference type="EC" id="2.7.7.48" evidence="8"/>
<dbReference type="EMBL" id="X01087">
    <property type="protein sequence ID" value="CAA25565.1"/>
    <property type="molecule type" value="Genomic_RNA"/>
</dbReference>
<dbReference type="EMBL" id="L05355">
    <property type="protein sequence ID" value="AAA45758.1"/>
    <property type="molecule type" value="Genomic_RNA"/>
</dbReference>
<dbReference type="EMBL" id="K02121">
    <property type="protein sequence ID" value="AAA45756.1"/>
    <property type="molecule type" value="Genomic_RNA"/>
</dbReference>
<dbReference type="PIR" id="A03901">
    <property type="entry name" value="GNNYH4"/>
</dbReference>
<dbReference type="RefSeq" id="NP_041009.1">
    <property type="nucleotide sequence ID" value="NC_001490.1"/>
</dbReference>
<dbReference type="PDB" id="1D3I">
    <property type="method" value="EM"/>
    <property type="resolution" value="26.00 A"/>
    <property type="chains" value="1=568-856, 2=70-331, 3=332-567, 4=2-69"/>
</dbReference>
<dbReference type="PDB" id="1HRI">
    <property type="method" value="X-ray"/>
    <property type="resolution" value="3.00 A"/>
    <property type="chains" value="1=568-856, 2=70-331, 3=332-567, 4=2-69"/>
</dbReference>
<dbReference type="PDB" id="1HRV">
    <property type="method" value="X-ray"/>
    <property type="resolution" value="3.00 A"/>
    <property type="chains" value="1=568-856, 2=70-331, 3=332-567, 4=2-69"/>
</dbReference>
<dbReference type="PDB" id="1K5M">
    <property type="method" value="X-ray"/>
    <property type="resolution" value="2.70 A"/>
    <property type="chains" value="A=568-856, B=70-331, C=332-567, D=2-69"/>
</dbReference>
<dbReference type="PDB" id="1NA1">
    <property type="method" value="X-ray"/>
    <property type="resolution" value="3.30 A"/>
    <property type="chains" value="A=568-856, B=70-331, C=332-567, D=2-69"/>
</dbReference>
<dbReference type="PDB" id="1NCQ">
    <property type="method" value="X-ray"/>
    <property type="resolution" value="2.50 A"/>
    <property type="chains" value="A=568-856, B=70-331, C=332-567, D=2-69"/>
</dbReference>
<dbReference type="PDB" id="1R08">
    <property type="method" value="X-ray"/>
    <property type="resolution" value="3.00 A"/>
    <property type="chains" value="1=568-856, 2=70-331, 3=332-567, 4=2-69"/>
</dbReference>
<dbReference type="PDB" id="1R09">
    <property type="method" value="X-ray"/>
    <property type="resolution" value="2.90 A"/>
    <property type="chains" value="1=568-856, 2=70-331, 3=332-567, 4=2-69"/>
</dbReference>
<dbReference type="PDB" id="1RMU">
    <property type="method" value="X-ray"/>
    <property type="resolution" value="3.00 A"/>
    <property type="chains" value="1=568-856, 2=70-331, 3=332-567, 4=2-69"/>
</dbReference>
<dbReference type="PDB" id="1RUC">
    <property type="method" value="X-ray"/>
    <property type="resolution" value="3.10 A"/>
    <property type="chains" value="1=568-856, 2=70-331, 3=332-567, 4=2-69"/>
</dbReference>
<dbReference type="PDB" id="1RUD">
    <property type="method" value="X-ray"/>
    <property type="resolution" value="2.90 A"/>
    <property type="chains" value="1=568-856, 2=70-331, 3=332-567, 4=2-69"/>
</dbReference>
<dbReference type="PDB" id="1RUE">
    <property type="method" value="X-ray"/>
    <property type="resolution" value="2.90 A"/>
    <property type="chains" value="1=568-856, 2=70-331, 3=332-567, 4=2-69"/>
</dbReference>
<dbReference type="PDB" id="1RUF">
    <property type="method" value="X-ray"/>
    <property type="resolution" value="2.90 A"/>
    <property type="chains" value="1=568-856, 2=70-331, 3=332-567, 4=2-69"/>
</dbReference>
<dbReference type="PDB" id="1RUG">
    <property type="method" value="X-ray"/>
    <property type="resolution" value="3.00 A"/>
    <property type="chains" value="1=568-856, 2=70-331, 3=332-567, 4=2-69"/>
</dbReference>
<dbReference type="PDB" id="1RUH">
    <property type="method" value="X-ray"/>
    <property type="resolution" value="3.00 A"/>
    <property type="chains" value="1=568-856, 2=70-331, 3=332-567, 4=2-69"/>
</dbReference>
<dbReference type="PDB" id="1RUI">
    <property type="method" value="X-ray"/>
    <property type="resolution" value="3.00 A"/>
    <property type="chains" value="1=568-856, 2=70-331, 3=332-567, 4=2-69"/>
</dbReference>
<dbReference type="PDB" id="1RUJ">
    <property type="method" value="X-ray"/>
    <property type="resolution" value="3.00 A"/>
    <property type="chains" value="1=568-856, 2=70-331, 3=332-567, 4=2-69"/>
</dbReference>
<dbReference type="PDB" id="1RVF">
    <property type="method" value="X-ray"/>
    <property type="resolution" value="4.00 A"/>
    <property type="chains" value="1=568-856, 2=70-331, 3=332-567, 4=2-69"/>
</dbReference>
<dbReference type="PDB" id="1VRH">
    <property type="method" value="X-ray"/>
    <property type="resolution" value="3.00 A"/>
    <property type="chains" value="1=568-856, 2=70-331, 3=332-567, 4=2-69"/>
</dbReference>
<dbReference type="PDB" id="1XR5">
    <property type="method" value="X-ray"/>
    <property type="resolution" value="2.80 A"/>
    <property type="chains" value="A=1720-2179"/>
</dbReference>
<dbReference type="PDB" id="2B0F">
    <property type="method" value="NMR"/>
    <property type="chains" value="A=1538-1719"/>
</dbReference>
<dbReference type="PDB" id="2HWB">
    <property type="method" value="X-ray"/>
    <property type="resolution" value="3.00 A"/>
    <property type="chains" value="1=568-856, 2=70-331, 3=332-567, 4=2-69"/>
</dbReference>
<dbReference type="PDB" id="2HWC">
    <property type="method" value="X-ray"/>
    <property type="resolution" value="3.00 A"/>
    <property type="chains" value="1=568-856, 2=70-331, 3=332-567, 4=2-69"/>
</dbReference>
<dbReference type="PDB" id="2IN2">
    <property type="method" value="NMR"/>
    <property type="chains" value="A=1538-1719"/>
</dbReference>
<dbReference type="PDB" id="2R04">
    <property type="method" value="X-ray"/>
    <property type="resolution" value="3.00 A"/>
    <property type="chains" value="1=568-856, 2=70-331, 3=332-567, 4=2-69"/>
</dbReference>
<dbReference type="PDB" id="2R06">
    <property type="method" value="X-ray"/>
    <property type="resolution" value="3.00 A"/>
    <property type="chains" value="1=568-856, 2=70-331, 3=332-567, 4=2-69"/>
</dbReference>
<dbReference type="PDB" id="2R07">
    <property type="method" value="X-ray"/>
    <property type="resolution" value="3.00 A"/>
    <property type="chains" value="1=568-856, 2=70-331, 3=332-567, 4=2-69"/>
</dbReference>
<dbReference type="PDB" id="2RM2">
    <property type="method" value="X-ray"/>
    <property type="resolution" value="3.00 A"/>
    <property type="chains" value="1=568-856, 2=70-331, 3=332-567, 4=2-69"/>
</dbReference>
<dbReference type="PDB" id="2RMU">
    <property type="method" value="X-ray"/>
    <property type="resolution" value="3.00 A"/>
    <property type="chains" value="1=568-856, 2=70-331, 3=332-567, 4=2-69"/>
</dbReference>
<dbReference type="PDB" id="2RR1">
    <property type="method" value="X-ray"/>
    <property type="resolution" value="3.00 A"/>
    <property type="chains" value="1=568-856, 2=70-331, 3=332-567, 4=2-69"/>
</dbReference>
<dbReference type="PDB" id="2RS1">
    <property type="method" value="X-ray"/>
    <property type="resolution" value="3.00 A"/>
    <property type="chains" value="1=568-856, 2=70-331, 3=332-567, 4=2-69"/>
</dbReference>
<dbReference type="PDB" id="2RS3">
    <property type="method" value="X-ray"/>
    <property type="resolution" value="3.00 A"/>
    <property type="chains" value="1=568-856, 2=70-331, 3=332-567, 4=2-69"/>
</dbReference>
<dbReference type="PDB" id="2RS5">
    <property type="method" value="X-ray"/>
    <property type="resolution" value="3.00 A"/>
    <property type="chains" value="1=568-856, 2=70-331, 3=332-567, 4=2-69"/>
</dbReference>
<dbReference type="PDB" id="4PDW">
    <property type="method" value="X-ray"/>
    <property type="resolution" value="3.00 A"/>
    <property type="chains" value="A=568-856, B=70-331, C=332-567"/>
</dbReference>
<dbReference type="PDB" id="4RHV">
    <property type="method" value="X-ray"/>
    <property type="resolution" value="3.00 A"/>
    <property type="chains" value="1=568-856, 2=70-331, 3=332-567, 4=2-69"/>
</dbReference>
<dbReference type="PDB" id="5W3E">
    <property type="method" value="EM"/>
    <property type="resolution" value="2.53 A"/>
    <property type="chains" value="A=568-856, B=332-567, C=70-331, D=2-69"/>
</dbReference>
<dbReference type="PDB" id="5W3L">
    <property type="method" value="EM"/>
    <property type="resolution" value="2.71 A"/>
    <property type="chains" value="A=568-856, B=332-567, C=70-331, D=2-69"/>
</dbReference>
<dbReference type="PDB" id="5W3M">
    <property type="method" value="EM"/>
    <property type="resolution" value="2.26 A"/>
    <property type="chains" value="A=568-856, B=332-567, C=70-331, D=2-69"/>
</dbReference>
<dbReference type="PDB" id="5W3O">
    <property type="method" value="EM"/>
    <property type="resolution" value="3.01 A"/>
    <property type="chains" value="A=568-856, B=332-567, C=70-331"/>
</dbReference>
<dbReference type="PDB" id="6HLT">
    <property type="method" value="X-ray"/>
    <property type="resolution" value="2.81 A"/>
    <property type="chains" value="B/D=1430-1485"/>
</dbReference>
<dbReference type="PDB" id="6KYZ">
    <property type="method" value="X-ray"/>
    <property type="resolution" value="1.84 A"/>
    <property type="chains" value="A/D=1538-1719"/>
</dbReference>
<dbReference type="PDB" id="6KZ0">
    <property type="method" value="X-ray"/>
    <property type="resolution" value="2.40 A"/>
    <property type="chains" value="A/D/G/J=1538-1719"/>
</dbReference>
<dbReference type="PDBsum" id="1D3I"/>
<dbReference type="PDBsum" id="1HRI"/>
<dbReference type="PDBsum" id="1HRV"/>
<dbReference type="PDBsum" id="1K5M"/>
<dbReference type="PDBsum" id="1NA1"/>
<dbReference type="PDBsum" id="1NCQ"/>
<dbReference type="PDBsum" id="1R08"/>
<dbReference type="PDBsum" id="1R09"/>
<dbReference type="PDBsum" id="1RMU"/>
<dbReference type="PDBsum" id="1RUC"/>
<dbReference type="PDBsum" id="1RUD"/>
<dbReference type="PDBsum" id="1RUE"/>
<dbReference type="PDBsum" id="1RUF"/>
<dbReference type="PDBsum" id="1RUG"/>
<dbReference type="PDBsum" id="1RUH"/>
<dbReference type="PDBsum" id="1RUI"/>
<dbReference type="PDBsum" id="1RUJ"/>
<dbReference type="PDBsum" id="1RVF"/>
<dbReference type="PDBsum" id="1VRH"/>
<dbReference type="PDBsum" id="1XR5"/>
<dbReference type="PDBsum" id="2B0F"/>
<dbReference type="PDBsum" id="2HWB"/>
<dbReference type="PDBsum" id="2HWC"/>
<dbReference type="PDBsum" id="2IN2"/>
<dbReference type="PDBsum" id="2R04"/>
<dbReference type="PDBsum" id="2R06"/>
<dbReference type="PDBsum" id="2R07"/>
<dbReference type="PDBsum" id="2RM2"/>
<dbReference type="PDBsum" id="2RMU"/>
<dbReference type="PDBsum" id="2RR1"/>
<dbReference type="PDBsum" id="2RS1"/>
<dbReference type="PDBsum" id="2RS3"/>
<dbReference type="PDBsum" id="2RS5"/>
<dbReference type="PDBsum" id="4PDW"/>
<dbReference type="PDBsum" id="4RHV"/>
<dbReference type="PDBsum" id="5W3E"/>
<dbReference type="PDBsum" id="5W3L"/>
<dbReference type="PDBsum" id="5W3M"/>
<dbReference type="PDBsum" id="5W3O"/>
<dbReference type="PDBsum" id="6HLT"/>
<dbReference type="PDBsum" id="6KYZ"/>
<dbReference type="PDBsum" id="6KZ0"/>
<dbReference type="BMRB" id="P03303"/>
<dbReference type="EMDB" id="EMD-12171"/>
<dbReference type="EMDB" id="EMD-12172"/>
<dbReference type="EMDB" id="EMD-12594"/>
<dbReference type="EMDB" id="EMD-12595"/>
<dbReference type="EMDB" id="EMD-12596"/>
<dbReference type="EMDB" id="EMD-12597"/>
<dbReference type="EMDB" id="EMD-12599"/>
<dbReference type="EMDB" id="EMD-17780"/>
<dbReference type="EMDB" id="EMD-17781"/>
<dbReference type="EMDB" id="EMD-8754"/>
<dbReference type="EMDB" id="EMD-8761"/>
<dbReference type="EMDB" id="EMD-8762"/>
<dbReference type="EMDB" id="EMD-8763"/>
<dbReference type="SMR" id="P03303"/>
<dbReference type="IntAct" id="P03303">
    <property type="interactions" value="2"/>
</dbReference>
<dbReference type="BindingDB" id="P03303"/>
<dbReference type="ChEMBL" id="CHEMBL4295564"/>
<dbReference type="DrugBank" id="DB08725">
    <property type="generic name" value="(S)-5-(7-(4-(4-Ethyl-4,5-dihydro-2-oxazolyl)phenoxy)heptyl)-3-methylisoxazole"/>
</dbReference>
<dbReference type="DrugBank" id="DB08543">
    <property type="generic name" value="1-[2-HYDROXY-3-(4-CYCLOHEXYL-PHENOXY)-PROPYL]-4-(2-PYRIDYL)-PIPERAZINE"/>
</dbReference>
<dbReference type="DrugBank" id="DB08509">
    <property type="generic name" value="1-[6-(2-CHLORO-4-METHYXYPHENOXY)-HEXYL]-IMIDAZOLE"/>
</dbReference>
<dbReference type="DrugBank" id="DB08540">
    <property type="generic name" value="2-[4-(2H-1,4-BENZOTHIAZINE-3-YL)-PIPERAZINE-1-LY]-1,3-THIAZOLE-4-CARBOXYLIC ACID ETHYLESTER"/>
</dbReference>
<dbReference type="DrugBank" id="DB08017">
    <property type="generic name" value="3-METHOXY-6-[4-(3-METHYLPHENYL)-1-PIPERAZINYL]PYRIDAZINE"/>
</dbReference>
<dbReference type="DrugBank" id="DB08727">
    <property type="generic name" value="3-Methyl-5-(7-{4-[(4R)-4-methyl-4,5-dihydro-1,3-oxazol-2-yl]phenoxy}heptyl)-1,2-oxazole"/>
</dbReference>
<dbReference type="DrugBank" id="DB08728">
    <property type="generic name" value="5-(3-(2,6-dichloro-4-(4,5-dihydro-2-oxazolyl)phenoxy)propyl)-3-methyl isoxazole"/>
</dbReference>
<dbReference type="DrugBank" id="DB08721">
    <property type="generic name" value="5-(5-(2,6-dichloro-4-(4,5-dihydro-2-oxazolyl)phenoxy)pentyl)-3-(hydroxyethyl oxymethyleneoxymethyl) isoxazole"/>
</dbReference>
<dbReference type="DrugBank" id="DB08720">
    <property type="generic name" value="5-(5-(4-(4,5-dihydro-2-oxazoly)phenoxy)pentyl)-3-methyl osoxazole"/>
</dbReference>
<dbReference type="DrugBank" id="DB08724">
    <property type="generic name" value="5-(5-(4-(5-hydro-4-methyl-2-oxazolyl)phenoxy)pentyl)-3-methyl isoxazole"/>
</dbReference>
<dbReference type="DrugBank" id="DB08719">
    <property type="generic name" value="5-(5-(6-CHLORO-4-(4,5-DIHYDRO-2-OXAZOLYL)PHENOXY)PENTYL)-3-METHYL ISOXAZOLE"/>
</dbReference>
<dbReference type="DrugBank" id="DB08726">
    <property type="generic name" value="5-(7-(4-(4,5-dihydro-2-oxazolyl)phenoxy)heptyl)-3-methyl isoxazole"/>
</dbReference>
<dbReference type="DrugBank" id="DB08722">
    <property type="generic name" value="5-(7-(6-chloro-4-(5-hydro-4-methyl-2-oxazolyl)phenoxy)heptyl)-3-methyl isoxazole"/>
</dbReference>
<dbReference type="DrugBank" id="DB05102">
    <property type="generic name" value="Rupintrivir"/>
</dbReference>
<dbReference type="DrugBank" id="DB03203">
    <property type="generic name" value="Sphingosine"/>
</dbReference>
<dbReference type="DrugBank" id="DB08723">
    <property type="generic name" value="WIN-54954"/>
</dbReference>
<dbReference type="MEROPS" id="C03.013"/>
<dbReference type="MEROPS" id="C03.020"/>
<dbReference type="MEROPS" id="N08.001"/>
<dbReference type="ABCD" id="P03303">
    <property type="antibodies" value="3 sequenced antibodies"/>
</dbReference>
<dbReference type="DNASU" id="1461213"/>
<dbReference type="GeneID" id="1461213"/>
<dbReference type="KEGG" id="vg:1461213"/>
<dbReference type="EvolutionaryTrace" id="P03303"/>
<dbReference type="Proteomes" id="UP000007679">
    <property type="component" value="Genome"/>
</dbReference>
<dbReference type="Proteomes" id="UP000118299">
    <property type="component" value="Segment"/>
</dbReference>
<dbReference type="GO" id="GO:0044162">
    <property type="term" value="C:host cell cytoplasmic vesicle membrane"/>
    <property type="evidence" value="ECO:0007669"/>
    <property type="project" value="UniProtKB-SubCell"/>
</dbReference>
<dbReference type="GO" id="GO:0042025">
    <property type="term" value="C:host cell nucleus"/>
    <property type="evidence" value="ECO:0007669"/>
    <property type="project" value="UniProtKB-SubCell"/>
</dbReference>
<dbReference type="GO" id="GO:0016020">
    <property type="term" value="C:membrane"/>
    <property type="evidence" value="ECO:0007669"/>
    <property type="project" value="UniProtKB-KW"/>
</dbReference>
<dbReference type="GO" id="GO:0039618">
    <property type="term" value="C:T=pseudo3 icosahedral viral capsid"/>
    <property type="evidence" value="ECO:0007669"/>
    <property type="project" value="UniProtKB-KW"/>
</dbReference>
<dbReference type="GO" id="GO:0005524">
    <property type="term" value="F:ATP binding"/>
    <property type="evidence" value="ECO:0007669"/>
    <property type="project" value="UniProtKB-KW"/>
</dbReference>
<dbReference type="GO" id="GO:0016887">
    <property type="term" value="F:ATP hydrolysis activity"/>
    <property type="evidence" value="ECO:0007669"/>
    <property type="project" value="InterPro"/>
</dbReference>
<dbReference type="GO" id="GO:0015267">
    <property type="term" value="F:channel activity"/>
    <property type="evidence" value="ECO:0007669"/>
    <property type="project" value="UniProtKB-KW"/>
</dbReference>
<dbReference type="GO" id="GO:0004197">
    <property type="term" value="F:cysteine-type endopeptidase activity"/>
    <property type="evidence" value="ECO:0007669"/>
    <property type="project" value="UniProtKB-EC"/>
</dbReference>
<dbReference type="GO" id="GO:0003723">
    <property type="term" value="F:RNA binding"/>
    <property type="evidence" value="ECO:0007669"/>
    <property type="project" value="UniProtKB-KW"/>
</dbReference>
<dbReference type="GO" id="GO:0003724">
    <property type="term" value="F:RNA helicase activity"/>
    <property type="evidence" value="ECO:0007669"/>
    <property type="project" value="InterPro"/>
</dbReference>
<dbReference type="GO" id="GO:0003968">
    <property type="term" value="F:RNA-directed RNA polymerase activity"/>
    <property type="evidence" value="ECO:0007669"/>
    <property type="project" value="UniProtKB-KW"/>
</dbReference>
<dbReference type="GO" id="GO:0005198">
    <property type="term" value="F:structural molecule activity"/>
    <property type="evidence" value="ECO:0007669"/>
    <property type="project" value="InterPro"/>
</dbReference>
<dbReference type="GO" id="GO:0008270">
    <property type="term" value="F:zinc ion binding"/>
    <property type="evidence" value="ECO:0007669"/>
    <property type="project" value="UniProtKB-KW"/>
</dbReference>
<dbReference type="GO" id="GO:0006260">
    <property type="term" value="P:DNA replication"/>
    <property type="evidence" value="ECO:0007669"/>
    <property type="project" value="UniProtKB-KW"/>
</dbReference>
<dbReference type="GO" id="GO:0006351">
    <property type="term" value="P:DNA-templated transcription"/>
    <property type="evidence" value="ECO:0007669"/>
    <property type="project" value="InterPro"/>
</dbReference>
<dbReference type="GO" id="GO:0075509">
    <property type="term" value="P:endocytosis involved in viral entry into host cell"/>
    <property type="evidence" value="ECO:0007669"/>
    <property type="project" value="UniProtKB-KW"/>
</dbReference>
<dbReference type="GO" id="GO:0039664">
    <property type="term" value="P:lysis of host organelle involved in viral entry into host cell"/>
    <property type="evidence" value="ECO:0007669"/>
    <property type="project" value="UniProtKB-KW"/>
</dbReference>
<dbReference type="GO" id="GO:0034220">
    <property type="term" value="P:monoatomic ion transmembrane transport"/>
    <property type="evidence" value="ECO:0007669"/>
    <property type="project" value="UniProtKB-KW"/>
</dbReference>
<dbReference type="GO" id="GO:0006508">
    <property type="term" value="P:proteolysis"/>
    <property type="evidence" value="ECO:0007669"/>
    <property type="project" value="UniProtKB-KW"/>
</dbReference>
<dbReference type="GO" id="GO:0044694">
    <property type="term" value="P:symbiont genome entry into host cell via pore formation in plasma membrane"/>
    <property type="evidence" value="ECO:0007669"/>
    <property type="project" value="UniProtKB-KW"/>
</dbReference>
<dbReference type="GO" id="GO:0039520">
    <property type="term" value="P:symbiont-mediated activation of host autophagy"/>
    <property type="evidence" value="ECO:0000250"/>
    <property type="project" value="UniProtKB"/>
</dbReference>
<dbReference type="GO" id="GO:0039540">
    <property type="term" value="P:symbiont-mediated suppression of host cytoplasmic pattern recognition receptor signaling pathway via inhibition of RIG-I activity"/>
    <property type="evidence" value="ECO:0007669"/>
    <property type="project" value="UniProtKB-KW"/>
</dbReference>
<dbReference type="GO" id="GO:0039522">
    <property type="term" value="P:symbiont-mediated suppression of host mRNA export from nucleus"/>
    <property type="evidence" value="ECO:0007669"/>
    <property type="project" value="UniProtKB-KW"/>
</dbReference>
<dbReference type="GO" id="GO:0039694">
    <property type="term" value="P:viral RNA genome replication"/>
    <property type="evidence" value="ECO:0007669"/>
    <property type="project" value="InterPro"/>
</dbReference>
<dbReference type="GO" id="GO:0019062">
    <property type="term" value="P:virion attachment to host cell"/>
    <property type="evidence" value="ECO:0007669"/>
    <property type="project" value="UniProtKB-KW"/>
</dbReference>
<dbReference type="CDD" id="cd00205">
    <property type="entry name" value="rhv_like"/>
    <property type="match status" value="3"/>
</dbReference>
<dbReference type="FunFam" id="1.20.960.20:FF:000001">
    <property type="entry name" value="Genome polyprotein"/>
    <property type="match status" value="1"/>
</dbReference>
<dbReference type="FunFam" id="2.60.120.20:FF:000001">
    <property type="entry name" value="Genome polyprotein"/>
    <property type="match status" value="1"/>
</dbReference>
<dbReference type="FunFam" id="2.60.120.20:FF:000002">
    <property type="entry name" value="Genome polyprotein"/>
    <property type="match status" value="1"/>
</dbReference>
<dbReference type="FunFam" id="2.60.120.20:FF:000004">
    <property type="entry name" value="Genome polyprotein"/>
    <property type="match status" value="1"/>
</dbReference>
<dbReference type="FunFam" id="3.30.70.270:FF:000008">
    <property type="entry name" value="Genome polyprotein"/>
    <property type="match status" value="1"/>
</dbReference>
<dbReference type="Gene3D" id="1.20.960.20">
    <property type="match status" value="1"/>
</dbReference>
<dbReference type="Gene3D" id="2.60.120.20">
    <property type="match status" value="3"/>
</dbReference>
<dbReference type="Gene3D" id="3.30.70.270">
    <property type="match status" value="1"/>
</dbReference>
<dbReference type="Gene3D" id="4.10.80.10">
    <property type="entry name" value="Picornavirus coat protein VP4"/>
    <property type="match status" value="1"/>
</dbReference>
<dbReference type="Gene3D" id="6.10.20.20">
    <property type="entry name" value="Poliovirus 3A protein-like"/>
    <property type="match status" value="1"/>
</dbReference>
<dbReference type="Gene3D" id="4.10.880.10">
    <property type="entry name" value="Poliovirus 3D polymerase Domain 1 (Nucleotidyltransferase)"/>
    <property type="match status" value="2"/>
</dbReference>
<dbReference type="Gene3D" id="2.40.10.10">
    <property type="entry name" value="Trypsin-like serine proteases"/>
    <property type="match status" value="4"/>
</dbReference>
<dbReference type="InterPro" id="IPR003593">
    <property type="entry name" value="AAA+_ATPase"/>
</dbReference>
<dbReference type="InterPro" id="IPR043502">
    <property type="entry name" value="DNA/RNA_pol_sf"/>
</dbReference>
<dbReference type="InterPro" id="IPR000605">
    <property type="entry name" value="Helicase_SF3_ssDNA/RNA_vir"/>
</dbReference>
<dbReference type="InterPro" id="IPR014759">
    <property type="entry name" value="Helicase_SF3_ssRNA_vir"/>
</dbReference>
<dbReference type="InterPro" id="IPR027417">
    <property type="entry name" value="P-loop_NTPase"/>
</dbReference>
<dbReference type="InterPro" id="IPR014838">
    <property type="entry name" value="P3A"/>
</dbReference>
<dbReference type="InterPro" id="IPR036203">
    <property type="entry name" value="P3A_soluble_dom"/>
</dbReference>
<dbReference type="InterPro" id="IPR044067">
    <property type="entry name" value="PCV_3C_PRO"/>
</dbReference>
<dbReference type="InterPro" id="IPR000081">
    <property type="entry name" value="Peptidase_C3"/>
</dbReference>
<dbReference type="InterPro" id="IPR000199">
    <property type="entry name" value="Peptidase_C3A/C3B_picornavir"/>
</dbReference>
<dbReference type="InterPro" id="IPR009003">
    <property type="entry name" value="Peptidase_S1_PA"/>
</dbReference>
<dbReference type="InterPro" id="IPR043504">
    <property type="entry name" value="Peptidase_S1_PA_chymotrypsin"/>
</dbReference>
<dbReference type="InterPro" id="IPR003138">
    <property type="entry name" value="Pico_P1A"/>
</dbReference>
<dbReference type="InterPro" id="IPR036988">
    <property type="entry name" value="Pico_P1A_sf"/>
</dbReference>
<dbReference type="InterPro" id="IPR002527">
    <property type="entry name" value="Pico_P2B"/>
</dbReference>
<dbReference type="InterPro" id="IPR001676">
    <property type="entry name" value="Picornavirus_capsid"/>
</dbReference>
<dbReference type="InterPro" id="IPR043128">
    <property type="entry name" value="Rev_trsase/Diguanyl_cyclase"/>
</dbReference>
<dbReference type="InterPro" id="IPR033703">
    <property type="entry name" value="Rhv-like"/>
</dbReference>
<dbReference type="InterPro" id="IPR001205">
    <property type="entry name" value="RNA-dir_pol_C"/>
</dbReference>
<dbReference type="InterPro" id="IPR007094">
    <property type="entry name" value="RNA-dir_pol_PSvirus"/>
</dbReference>
<dbReference type="InterPro" id="IPR029053">
    <property type="entry name" value="Viral_coat"/>
</dbReference>
<dbReference type="Pfam" id="PF08727">
    <property type="entry name" value="P3A"/>
    <property type="match status" value="1"/>
</dbReference>
<dbReference type="Pfam" id="PF00548">
    <property type="entry name" value="Peptidase_C3"/>
    <property type="match status" value="1"/>
</dbReference>
<dbReference type="Pfam" id="PF02226">
    <property type="entry name" value="Pico_P1A"/>
    <property type="match status" value="1"/>
</dbReference>
<dbReference type="Pfam" id="PF00947">
    <property type="entry name" value="Pico_P2A"/>
    <property type="match status" value="1"/>
</dbReference>
<dbReference type="Pfam" id="PF01552">
    <property type="entry name" value="Pico_P2B"/>
    <property type="match status" value="1"/>
</dbReference>
<dbReference type="Pfam" id="PF00680">
    <property type="entry name" value="RdRP_1"/>
    <property type="match status" value="1"/>
</dbReference>
<dbReference type="Pfam" id="PF00073">
    <property type="entry name" value="Rhv"/>
    <property type="match status" value="3"/>
</dbReference>
<dbReference type="Pfam" id="PF00910">
    <property type="entry name" value="RNA_helicase"/>
    <property type="match status" value="1"/>
</dbReference>
<dbReference type="SMART" id="SM00382">
    <property type="entry name" value="AAA"/>
    <property type="match status" value="1"/>
</dbReference>
<dbReference type="SUPFAM" id="SSF56672">
    <property type="entry name" value="DNA/RNA polymerases"/>
    <property type="match status" value="1"/>
</dbReference>
<dbReference type="SUPFAM" id="SSF52540">
    <property type="entry name" value="P-loop containing nucleoside triphosphate hydrolases"/>
    <property type="match status" value="1"/>
</dbReference>
<dbReference type="SUPFAM" id="SSF88633">
    <property type="entry name" value="Positive stranded ssRNA viruses"/>
    <property type="match status" value="2"/>
</dbReference>
<dbReference type="SUPFAM" id="SSF89043">
    <property type="entry name" value="Soluble domain of poliovirus core protein 3a"/>
    <property type="match status" value="1"/>
</dbReference>
<dbReference type="SUPFAM" id="SSF50494">
    <property type="entry name" value="Trypsin-like serine proteases"/>
    <property type="match status" value="2"/>
</dbReference>
<dbReference type="PROSITE" id="PS51874">
    <property type="entry name" value="PCV_3C_PRO"/>
    <property type="match status" value="1"/>
</dbReference>
<dbReference type="PROSITE" id="PS50507">
    <property type="entry name" value="RDRP_SSRNA_POS"/>
    <property type="match status" value="1"/>
</dbReference>
<dbReference type="PROSITE" id="PS51218">
    <property type="entry name" value="SF3_HELICASE_2"/>
    <property type="match status" value="1"/>
</dbReference>
<name>POLG_HRV14</name>